<gene>
    <name evidence="35" type="primary">ATP13A2</name>
    <name evidence="28" type="synonym">PARK9</name>
</gene>
<organism>
    <name type="scientific">Homo sapiens</name>
    <name type="common">Human</name>
    <dbReference type="NCBI Taxonomy" id="9606"/>
    <lineage>
        <taxon>Eukaryota</taxon>
        <taxon>Metazoa</taxon>
        <taxon>Chordata</taxon>
        <taxon>Craniata</taxon>
        <taxon>Vertebrata</taxon>
        <taxon>Euteleostomi</taxon>
        <taxon>Mammalia</taxon>
        <taxon>Eutheria</taxon>
        <taxon>Euarchontoglires</taxon>
        <taxon>Primates</taxon>
        <taxon>Haplorrhini</taxon>
        <taxon>Catarrhini</taxon>
        <taxon>Hominidae</taxon>
        <taxon>Homo</taxon>
    </lineage>
</organism>
<dbReference type="EC" id="7.6.2.-" evidence="24"/>
<dbReference type="EMBL" id="AL354615">
    <property type="protein sequence ID" value="CAB89728.1"/>
    <property type="molecule type" value="mRNA"/>
</dbReference>
<dbReference type="EMBL" id="AY461712">
    <property type="protein sequence ID" value="AAR23423.1"/>
    <property type="molecule type" value="mRNA"/>
</dbReference>
<dbReference type="EMBL" id="AK290210">
    <property type="protein sequence ID" value="BAF82899.1"/>
    <property type="molecule type" value="mRNA"/>
</dbReference>
<dbReference type="EMBL" id="AL049569">
    <property type="status" value="NOT_ANNOTATED_CDS"/>
    <property type="molecule type" value="Genomic_DNA"/>
</dbReference>
<dbReference type="EMBL" id="CH471134">
    <property type="protein sequence ID" value="EAW94825.1"/>
    <property type="molecule type" value="Genomic_DNA"/>
</dbReference>
<dbReference type="EMBL" id="CH471134">
    <property type="protein sequence ID" value="EAW94827.1"/>
    <property type="molecule type" value="Genomic_DNA"/>
</dbReference>
<dbReference type="EMBL" id="BC030267">
    <property type="protein sequence ID" value="AAH30267.1"/>
    <property type="molecule type" value="mRNA"/>
</dbReference>
<dbReference type="EMBL" id="AL833966">
    <property type="protein sequence ID" value="CAD38813.2"/>
    <property type="molecule type" value="mRNA"/>
</dbReference>
<dbReference type="EMBL" id="AJ009947">
    <property type="protein sequence ID" value="CAA08912.1"/>
    <property type="status" value="ALT_FRAME"/>
    <property type="molecule type" value="mRNA"/>
</dbReference>
<dbReference type="CCDS" id="CCDS175.1">
    <molecule id="Q9NQ11-1"/>
</dbReference>
<dbReference type="CCDS" id="CCDS44072.1">
    <molecule id="Q9NQ11-2"/>
</dbReference>
<dbReference type="CCDS" id="CCDS44073.1">
    <molecule id="Q9NQ11-3"/>
</dbReference>
<dbReference type="RefSeq" id="NP_001135445.1">
    <molecule id="Q9NQ11-3"/>
    <property type="nucleotide sequence ID" value="NM_001141973.3"/>
</dbReference>
<dbReference type="RefSeq" id="NP_001135446.1">
    <molecule id="Q9NQ11-2"/>
    <property type="nucleotide sequence ID" value="NM_001141974.3"/>
</dbReference>
<dbReference type="RefSeq" id="NP_071372.1">
    <molecule id="Q9NQ11-1"/>
    <property type="nucleotide sequence ID" value="NM_022089.4"/>
</dbReference>
<dbReference type="PDB" id="7FJM">
    <property type="method" value="EM"/>
    <property type="resolution" value="3.30 A"/>
    <property type="chains" value="A=1-1180"/>
</dbReference>
<dbReference type="PDB" id="7FJP">
    <property type="method" value="EM"/>
    <property type="resolution" value="3.00 A"/>
    <property type="chains" value="B=1-1180"/>
</dbReference>
<dbReference type="PDB" id="7FJQ">
    <property type="method" value="EM"/>
    <property type="resolution" value="3.60 A"/>
    <property type="chains" value="A=1-1180"/>
</dbReference>
<dbReference type="PDB" id="7M5V">
    <property type="method" value="EM"/>
    <property type="resolution" value="2.90 A"/>
    <property type="chains" value="A=1-1180"/>
</dbReference>
<dbReference type="PDB" id="7M5X">
    <property type="method" value="EM"/>
    <property type="resolution" value="2.70 A"/>
    <property type="chains" value="A=1-1180"/>
</dbReference>
<dbReference type="PDB" id="7M5Y">
    <property type="method" value="EM"/>
    <property type="resolution" value="3.00 A"/>
    <property type="chains" value="A=1-1180"/>
</dbReference>
<dbReference type="PDB" id="7N70">
    <property type="method" value="EM"/>
    <property type="resolution" value="2.80 A"/>
    <property type="chains" value="A=1-1180"/>
</dbReference>
<dbReference type="PDB" id="7N72">
    <property type="method" value="EM"/>
    <property type="resolution" value="2.50 A"/>
    <property type="chains" value="A=1-1180"/>
</dbReference>
<dbReference type="PDB" id="7N73">
    <property type="method" value="EM"/>
    <property type="resolution" value="2.90 A"/>
    <property type="chains" value="A=1-1180"/>
</dbReference>
<dbReference type="PDB" id="7N74">
    <property type="method" value="EM"/>
    <property type="resolution" value="2.80 A"/>
    <property type="chains" value="A=1-1180"/>
</dbReference>
<dbReference type="PDB" id="7N75">
    <property type="method" value="EM"/>
    <property type="resolution" value="2.90 A"/>
    <property type="chains" value="A=1-1180"/>
</dbReference>
<dbReference type="PDB" id="7N76">
    <property type="method" value="EM"/>
    <property type="resolution" value="2.90 A"/>
    <property type="chains" value="A=1-1180"/>
</dbReference>
<dbReference type="PDB" id="7N77">
    <property type="method" value="EM"/>
    <property type="resolution" value="3.20 A"/>
    <property type="chains" value="A=1-1180"/>
</dbReference>
<dbReference type="PDB" id="7N78">
    <property type="method" value="EM"/>
    <property type="resolution" value="3.00 A"/>
    <property type="chains" value="A=1-1180"/>
</dbReference>
<dbReference type="PDB" id="7VPI">
    <property type="method" value="EM"/>
    <property type="resolution" value="3.50 A"/>
    <property type="chains" value="A=1-1180"/>
</dbReference>
<dbReference type="PDB" id="7VPJ">
    <property type="method" value="EM"/>
    <property type="resolution" value="3.50 A"/>
    <property type="chains" value="A=1-1180"/>
</dbReference>
<dbReference type="PDB" id="7VPK">
    <property type="method" value="EM"/>
    <property type="resolution" value="3.50 A"/>
    <property type="chains" value="A=1-1180"/>
</dbReference>
<dbReference type="PDB" id="7VPL">
    <property type="method" value="EM"/>
    <property type="resolution" value="3.50 A"/>
    <property type="chains" value="A=1-1180"/>
</dbReference>
<dbReference type="PDB" id="8IEK">
    <property type="method" value="EM"/>
    <property type="resolution" value="3.20 A"/>
    <property type="chains" value="P=1-1180"/>
</dbReference>
<dbReference type="PDB" id="8IEL">
    <property type="method" value="EM"/>
    <property type="resolution" value="5.65 A"/>
    <property type="chains" value="P=36-1169"/>
</dbReference>
<dbReference type="PDB" id="8IEM">
    <property type="method" value="EM"/>
    <property type="resolution" value="3.35 A"/>
    <property type="chains" value="P=36-1169"/>
</dbReference>
<dbReference type="PDB" id="8IEN">
    <property type="method" value="EM"/>
    <property type="resolution" value="3.25 A"/>
    <property type="chains" value="P=1-1180"/>
</dbReference>
<dbReference type="PDB" id="8IEO">
    <property type="method" value="EM"/>
    <property type="resolution" value="3.78 A"/>
    <property type="chains" value="P=1-1180"/>
</dbReference>
<dbReference type="PDB" id="8IER">
    <property type="method" value="EM"/>
    <property type="resolution" value="4.87 A"/>
    <property type="chains" value="P=1-1180"/>
</dbReference>
<dbReference type="PDB" id="8IES">
    <property type="method" value="EM"/>
    <property type="resolution" value="3.73 A"/>
    <property type="chains" value="P=36-1180"/>
</dbReference>
<dbReference type="PDBsum" id="7FJM"/>
<dbReference type="PDBsum" id="7FJP"/>
<dbReference type="PDBsum" id="7FJQ"/>
<dbReference type="PDBsum" id="7M5V"/>
<dbReference type="PDBsum" id="7M5X"/>
<dbReference type="PDBsum" id="7M5Y"/>
<dbReference type="PDBsum" id="7N70"/>
<dbReference type="PDBsum" id="7N72"/>
<dbReference type="PDBsum" id="7N73"/>
<dbReference type="PDBsum" id="7N74"/>
<dbReference type="PDBsum" id="7N75"/>
<dbReference type="PDBsum" id="7N76"/>
<dbReference type="PDBsum" id="7N77"/>
<dbReference type="PDBsum" id="7N78"/>
<dbReference type="PDBsum" id="7VPI"/>
<dbReference type="PDBsum" id="7VPJ"/>
<dbReference type="PDBsum" id="7VPK"/>
<dbReference type="PDBsum" id="7VPL"/>
<dbReference type="PDBsum" id="8IEK"/>
<dbReference type="PDBsum" id="8IEL"/>
<dbReference type="PDBsum" id="8IEM"/>
<dbReference type="PDBsum" id="8IEN"/>
<dbReference type="PDBsum" id="8IEO"/>
<dbReference type="PDBsum" id="8IER"/>
<dbReference type="PDBsum" id="8IES"/>
<dbReference type="EMDB" id="EMD-23683"/>
<dbReference type="EMDB" id="EMD-23684"/>
<dbReference type="EMDB" id="EMD-23685"/>
<dbReference type="EMDB" id="EMD-24212"/>
<dbReference type="EMDB" id="EMD-24213"/>
<dbReference type="EMDB" id="EMD-24214"/>
<dbReference type="EMDB" id="EMD-24215"/>
<dbReference type="EMDB" id="EMD-24216"/>
<dbReference type="EMDB" id="EMD-24217"/>
<dbReference type="EMDB" id="EMD-24218"/>
<dbReference type="EMDB" id="EMD-24219"/>
<dbReference type="EMDB" id="EMD-24221"/>
<dbReference type="EMDB" id="EMD-24222"/>
<dbReference type="EMDB" id="EMD-24223"/>
<dbReference type="EMDB" id="EMD-31623"/>
<dbReference type="EMDB" id="EMD-31626"/>
<dbReference type="EMDB" id="EMD-31627"/>
<dbReference type="EMDB" id="EMD-32066"/>
<dbReference type="EMDB" id="EMD-32067"/>
<dbReference type="EMDB" id="EMD-32068"/>
<dbReference type="EMDB" id="EMD-32069"/>
<dbReference type="EMDB" id="EMD-35384"/>
<dbReference type="EMDB" id="EMD-35385"/>
<dbReference type="EMDB" id="EMD-35386"/>
<dbReference type="EMDB" id="EMD-35387"/>
<dbReference type="EMDB" id="EMD-35388"/>
<dbReference type="EMDB" id="EMD-35391"/>
<dbReference type="EMDB" id="EMD-35392"/>
<dbReference type="SMR" id="Q9NQ11"/>
<dbReference type="BioGRID" id="116973">
    <property type="interactions" value="105"/>
</dbReference>
<dbReference type="FunCoup" id="Q9NQ11">
    <property type="interactions" value="1150"/>
</dbReference>
<dbReference type="IntAct" id="Q9NQ11">
    <property type="interactions" value="91"/>
</dbReference>
<dbReference type="MINT" id="Q9NQ11"/>
<dbReference type="STRING" id="9606.ENSP00000327214"/>
<dbReference type="TCDB" id="3.A.3.10.7">
    <property type="family name" value="the p-type atpase (p-atpase) superfamily"/>
</dbReference>
<dbReference type="GlyCosmos" id="Q9NQ11">
    <property type="glycosylation" value="2 sites, No reported glycans"/>
</dbReference>
<dbReference type="GlyGen" id="Q9NQ11">
    <property type="glycosylation" value="4 sites, 1 O-linked glycan (1 site)"/>
</dbReference>
<dbReference type="iPTMnet" id="Q9NQ11"/>
<dbReference type="PhosphoSitePlus" id="Q9NQ11"/>
<dbReference type="SwissPalm" id="Q9NQ11"/>
<dbReference type="BioMuta" id="ATP13A2"/>
<dbReference type="DMDM" id="14285364"/>
<dbReference type="jPOST" id="Q9NQ11"/>
<dbReference type="MassIVE" id="Q9NQ11"/>
<dbReference type="PaxDb" id="9606-ENSP00000327214"/>
<dbReference type="PeptideAtlas" id="Q9NQ11"/>
<dbReference type="ProteomicsDB" id="63479"/>
<dbReference type="ProteomicsDB" id="82052">
    <molecule id="Q9NQ11-1"/>
</dbReference>
<dbReference type="ProteomicsDB" id="82053">
    <molecule id="Q9NQ11-2"/>
</dbReference>
<dbReference type="ProteomicsDB" id="82054">
    <molecule id="Q9NQ11-3"/>
</dbReference>
<dbReference type="Pumba" id="Q9NQ11"/>
<dbReference type="Antibodypedia" id="29290">
    <property type="antibodies" value="196 antibodies from 24 providers"/>
</dbReference>
<dbReference type="DNASU" id="23400"/>
<dbReference type="Ensembl" id="ENST00000326735.13">
    <molecule id="Q9NQ11-1"/>
    <property type="protein sequence ID" value="ENSP00000327214.8"/>
    <property type="gene ID" value="ENSG00000159363.19"/>
</dbReference>
<dbReference type="Ensembl" id="ENST00000341676.9">
    <molecule id="Q9NQ11-2"/>
    <property type="protein sequence ID" value="ENSP00000341115.5"/>
    <property type="gene ID" value="ENSG00000159363.19"/>
</dbReference>
<dbReference type="Ensembl" id="ENST00000452699.5">
    <molecule id="Q9NQ11-3"/>
    <property type="protein sequence ID" value="ENSP00000413307.1"/>
    <property type="gene ID" value="ENSG00000159363.19"/>
</dbReference>
<dbReference type="GeneID" id="23400"/>
<dbReference type="KEGG" id="hsa:23400"/>
<dbReference type="MANE-Select" id="ENST00000326735.13">
    <property type="protein sequence ID" value="ENSP00000327214.8"/>
    <property type="RefSeq nucleotide sequence ID" value="NM_022089.4"/>
    <property type="RefSeq protein sequence ID" value="NP_071372.1"/>
</dbReference>
<dbReference type="UCSC" id="uc001baa.3">
    <molecule id="Q9NQ11-1"/>
    <property type="organism name" value="human"/>
</dbReference>
<dbReference type="AGR" id="HGNC:30213"/>
<dbReference type="CTD" id="23400"/>
<dbReference type="DisGeNET" id="23400"/>
<dbReference type="GeneCards" id="ATP13A2"/>
<dbReference type="HGNC" id="HGNC:30213">
    <property type="gene designation" value="ATP13A2"/>
</dbReference>
<dbReference type="HPA" id="ENSG00000159363">
    <property type="expression patterns" value="Tissue enhanced (brain)"/>
</dbReference>
<dbReference type="MalaCards" id="ATP13A2"/>
<dbReference type="MIM" id="606693">
    <property type="type" value="phenotype"/>
</dbReference>
<dbReference type="MIM" id="610513">
    <property type="type" value="gene"/>
</dbReference>
<dbReference type="MIM" id="617225">
    <property type="type" value="phenotype"/>
</dbReference>
<dbReference type="neXtProt" id="NX_Q9NQ11"/>
<dbReference type="OpenTargets" id="ENSG00000159363"/>
<dbReference type="Orphanet" id="513436">
    <property type="disease" value="Autosomal recessive spastic paraplegia type 78"/>
</dbReference>
<dbReference type="Orphanet" id="314632">
    <property type="disease" value="CLN12 disease"/>
</dbReference>
<dbReference type="Orphanet" id="306674">
    <property type="disease" value="Kufor-Rakeb syndrome"/>
</dbReference>
<dbReference type="PharmGKB" id="PA134897221"/>
<dbReference type="VEuPathDB" id="HostDB:ENSG00000159363"/>
<dbReference type="eggNOG" id="KOG0208">
    <property type="taxonomic scope" value="Eukaryota"/>
</dbReference>
<dbReference type="GeneTree" id="ENSGT00940000159714"/>
<dbReference type="HOGENOM" id="CLU_001828_0_0_1"/>
<dbReference type="InParanoid" id="Q9NQ11"/>
<dbReference type="OMA" id="SGWKDPL"/>
<dbReference type="OrthoDB" id="48943at2759"/>
<dbReference type="PAN-GO" id="Q9NQ11">
    <property type="GO annotations" value="8 GO annotations based on evolutionary models"/>
</dbReference>
<dbReference type="PhylomeDB" id="Q9NQ11"/>
<dbReference type="TreeFam" id="TF300331"/>
<dbReference type="PathwayCommons" id="Q9NQ11"/>
<dbReference type="Reactome" id="R-HSA-936837">
    <property type="pathway name" value="Ion transport by P-type ATPases"/>
</dbReference>
<dbReference type="SignaLink" id="Q9NQ11"/>
<dbReference type="BioGRID-ORCS" id="23400">
    <property type="hits" value="14 hits in 1156 CRISPR screens"/>
</dbReference>
<dbReference type="ChiTaRS" id="ATP13A2">
    <property type="organism name" value="human"/>
</dbReference>
<dbReference type="GeneWiki" id="ATP13A2"/>
<dbReference type="GenomeRNAi" id="23400"/>
<dbReference type="Pharos" id="Q9NQ11">
    <property type="development level" value="Tbio"/>
</dbReference>
<dbReference type="PRO" id="PR:Q9NQ11"/>
<dbReference type="Proteomes" id="UP000005640">
    <property type="component" value="Chromosome 1"/>
</dbReference>
<dbReference type="RNAct" id="Q9NQ11">
    <property type="molecule type" value="protein"/>
</dbReference>
<dbReference type="Bgee" id="ENSG00000159363">
    <property type="expression patterns" value="Expressed in right frontal lobe and 166 other cell types or tissues"/>
</dbReference>
<dbReference type="ExpressionAtlas" id="Q9NQ11">
    <property type="expression patterns" value="baseline and differential"/>
</dbReference>
<dbReference type="GO" id="GO:0005776">
    <property type="term" value="C:autophagosome"/>
    <property type="evidence" value="ECO:0000314"/>
    <property type="project" value="ParkinsonsUK-UCL"/>
</dbReference>
<dbReference type="GO" id="GO:0000421">
    <property type="term" value="C:autophagosome membrane"/>
    <property type="evidence" value="ECO:0007669"/>
    <property type="project" value="UniProtKB-SubCell"/>
</dbReference>
<dbReference type="GO" id="GO:0005770">
    <property type="term" value="C:late endosome"/>
    <property type="evidence" value="ECO:0000314"/>
    <property type="project" value="ParkinsonsUK-UCL"/>
</dbReference>
<dbReference type="GO" id="GO:0031902">
    <property type="term" value="C:late endosome membrane"/>
    <property type="evidence" value="ECO:0000314"/>
    <property type="project" value="UniProtKB"/>
</dbReference>
<dbReference type="GO" id="GO:0043202">
    <property type="term" value="C:lysosomal lumen"/>
    <property type="evidence" value="ECO:0000304"/>
    <property type="project" value="Reactome"/>
</dbReference>
<dbReference type="GO" id="GO:0005765">
    <property type="term" value="C:lysosomal membrane"/>
    <property type="evidence" value="ECO:0000314"/>
    <property type="project" value="UniProtKB"/>
</dbReference>
<dbReference type="GO" id="GO:0005764">
    <property type="term" value="C:lysosome"/>
    <property type="evidence" value="ECO:0000314"/>
    <property type="project" value="UniProtKB"/>
</dbReference>
<dbReference type="GO" id="GO:0016020">
    <property type="term" value="C:membrane"/>
    <property type="evidence" value="ECO:0000303"/>
    <property type="project" value="ParkinsonsUK-UCL"/>
</dbReference>
<dbReference type="GO" id="GO:0005771">
    <property type="term" value="C:multivesicular body"/>
    <property type="evidence" value="ECO:0000314"/>
    <property type="project" value="ParkinsonsUK-UCL"/>
</dbReference>
<dbReference type="GO" id="GO:0032585">
    <property type="term" value="C:multivesicular body membrane"/>
    <property type="evidence" value="ECO:0000303"/>
    <property type="project" value="ParkinsonsUK-UCL"/>
</dbReference>
<dbReference type="GO" id="GO:0043005">
    <property type="term" value="C:neuron projection"/>
    <property type="evidence" value="ECO:0000314"/>
    <property type="project" value="ParkinsonsUK-UCL"/>
</dbReference>
<dbReference type="GO" id="GO:0043025">
    <property type="term" value="C:neuronal cell body"/>
    <property type="evidence" value="ECO:0000314"/>
    <property type="project" value="ParkinsonsUK-UCL"/>
</dbReference>
<dbReference type="GO" id="GO:0030133">
    <property type="term" value="C:transport vesicle"/>
    <property type="evidence" value="ECO:0000314"/>
    <property type="project" value="ParkinsonsUK-UCL"/>
</dbReference>
<dbReference type="GO" id="GO:0031982">
    <property type="term" value="C:vesicle"/>
    <property type="evidence" value="ECO:0000314"/>
    <property type="project" value="ParkinsonsUK-UCL"/>
</dbReference>
<dbReference type="GO" id="GO:0015417">
    <property type="term" value="F:ABC-type polyamine transporter activity"/>
    <property type="evidence" value="ECO:0007669"/>
    <property type="project" value="RHEA"/>
</dbReference>
<dbReference type="GO" id="GO:0005524">
    <property type="term" value="F:ATP binding"/>
    <property type="evidence" value="ECO:0007669"/>
    <property type="project" value="UniProtKB-KW"/>
</dbReference>
<dbReference type="GO" id="GO:0016887">
    <property type="term" value="F:ATP hydrolysis activity"/>
    <property type="evidence" value="ECO:0000303"/>
    <property type="project" value="ParkinsonsUK-UCL"/>
</dbReference>
<dbReference type="GO" id="GO:0019829">
    <property type="term" value="F:ATPase-coupled monoatomic cation transmembrane transporter activity"/>
    <property type="evidence" value="ECO:0000318"/>
    <property type="project" value="GO_Central"/>
</dbReference>
<dbReference type="GO" id="GO:1903135">
    <property type="term" value="F:cupric ion binding"/>
    <property type="evidence" value="ECO:0000250"/>
    <property type="project" value="ParkinsonsUK-UCL"/>
</dbReference>
<dbReference type="GO" id="GO:0030145">
    <property type="term" value="F:manganese ion binding"/>
    <property type="evidence" value="ECO:0000250"/>
    <property type="project" value="ParkinsonsUK-UCL"/>
</dbReference>
<dbReference type="GO" id="GO:0015662">
    <property type="term" value="F:P-type ion transporter activity"/>
    <property type="evidence" value="ECO:0007669"/>
    <property type="project" value="InterPro"/>
</dbReference>
<dbReference type="GO" id="GO:0070300">
    <property type="term" value="F:phosphatidic acid binding"/>
    <property type="evidence" value="ECO:0000314"/>
    <property type="project" value="ParkinsonsUK-UCL"/>
</dbReference>
<dbReference type="GO" id="GO:0080025">
    <property type="term" value="F:phosphatidylinositol-3,5-bisphosphate binding"/>
    <property type="evidence" value="ECO:0000314"/>
    <property type="project" value="ParkinsonsUK-UCL"/>
</dbReference>
<dbReference type="GO" id="GO:0015203">
    <property type="term" value="F:polyamine transmembrane transporter activity"/>
    <property type="evidence" value="ECO:0000314"/>
    <property type="project" value="UniProtKB"/>
</dbReference>
<dbReference type="GO" id="GO:0008270">
    <property type="term" value="F:zinc ion binding"/>
    <property type="evidence" value="ECO:0000250"/>
    <property type="project" value="ParkinsonsUK-UCL"/>
</dbReference>
<dbReference type="GO" id="GO:1905037">
    <property type="term" value="P:autophagosome organization"/>
    <property type="evidence" value="ECO:0000314"/>
    <property type="project" value="ParkinsonsUK-UCL"/>
</dbReference>
<dbReference type="GO" id="GO:0061909">
    <property type="term" value="P:autophagosome-lysosome fusion"/>
    <property type="evidence" value="ECO:0000315"/>
    <property type="project" value="UniProtKB"/>
</dbReference>
<dbReference type="GO" id="GO:0006914">
    <property type="term" value="P:autophagy"/>
    <property type="evidence" value="ECO:0000315"/>
    <property type="project" value="UniProtKB"/>
</dbReference>
<dbReference type="GO" id="GO:0071287">
    <property type="term" value="P:cellular response to manganese ion"/>
    <property type="evidence" value="ECO:0000315"/>
    <property type="project" value="ParkinsonsUK-UCL"/>
</dbReference>
<dbReference type="GO" id="GO:0034599">
    <property type="term" value="P:cellular response to oxidative stress"/>
    <property type="evidence" value="ECO:0000315"/>
    <property type="project" value="ParkinsonsUK-UCL"/>
</dbReference>
<dbReference type="GO" id="GO:0071294">
    <property type="term" value="P:cellular response to zinc ion"/>
    <property type="evidence" value="ECO:0000304"/>
    <property type="project" value="ParkinsonsUK-UCL"/>
</dbReference>
<dbReference type="GO" id="GO:0097734">
    <property type="term" value="P:extracellular exosome biogenesis"/>
    <property type="evidence" value="ECO:0000315"/>
    <property type="project" value="ParkinsonsUK-UCL"/>
</dbReference>
<dbReference type="GO" id="GO:0006874">
    <property type="term" value="P:intracellular calcium ion homeostasis"/>
    <property type="evidence" value="ECO:0000314"/>
    <property type="project" value="ParkinsonsUK-UCL"/>
</dbReference>
<dbReference type="GO" id="GO:0006879">
    <property type="term" value="P:intracellular iron ion homeostasis"/>
    <property type="evidence" value="ECO:0000315"/>
    <property type="project" value="ParkinsonsUK-UCL"/>
</dbReference>
<dbReference type="GO" id="GO:0030003">
    <property type="term" value="P:intracellular monoatomic cation homeostasis"/>
    <property type="evidence" value="ECO:0000304"/>
    <property type="project" value="ParkinsonsUK-UCL"/>
</dbReference>
<dbReference type="GO" id="GO:0006882">
    <property type="term" value="P:intracellular zinc ion homeostasis"/>
    <property type="evidence" value="ECO:0000315"/>
    <property type="project" value="ParkinsonsUK-UCL"/>
</dbReference>
<dbReference type="GO" id="GO:0055088">
    <property type="term" value="P:lipid homeostasis"/>
    <property type="evidence" value="ECO:0000315"/>
    <property type="project" value="UniProtKB"/>
</dbReference>
<dbReference type="GO" id="GO:0007041">
    <property type="term" value="P:lysosomal transport"/>
    <property type="evidence" value="ECO:0000315"/>
    <property type="project" value="UniProtKB"/>
</dbReference>
<dbReference type="GO" id="GO:0034220">
    <property type="term" value="P:monoatomic ion transmembrane transport"/>
    <property type="evidence" value="ECO:0000304"/>
    <property type="project" value="Reactome"/>
</dbReference>
<dbReference type="GO" id="GO:1905166">
    <property type="term" value="P:negative regulation of lysosomal protein catabolic process"/>
    <property type="evidence" value="ECO:0000304"/>
    <property type="project" value="ParkinsonsUK-UCL"/>
</dbReference>
<dbReference type="GO" id="GO:1902047">
    <property type="term" value="P:polyamine transmembrane transport"/>
    <property type="evidence" value="ECO:0000314"/>
    <property type="project" value="ParkinsonsUK-UCL"/>
</dbReference>
<dbReference type="GO" id="GO:1903543">
    <property type="term" value="P:positive regulation of exosomal secretion"/>
    <property type="evidence" value="ECO:0000314"/>
    <property type="project" value="ParkinsonsUK-UCL"/>
</dbReference>
<dbReference type="GO" id="GO:0010628">
    <property type="term" value="P:positive regulation of gene expression"/>
    <property type="evidence" value="ECO:0000315"/>
    <property type="project" value="UniProtKB"/>
</dbReference>
<dbReference type="GO" id="GO:0050714">
    <property type="term" value="P:positive regulation of protein secretion"/>
    <property type="evidence" value="ECO:0000315"/>
    <property type="project" value="ParkinsonsUK-UCL"/>
</dbReference>
<dbReference type="GO" id="GO:0061462">
    <property type="term" value="P:protein localization to lysosome"/>
    <property type="evidence" value="ECO:0000315"/>
    <property type="project" value="UniProtKB"/>
</dbReference>
<dbReference type="GO" id="GO:0016243">
    <property type="term" value="P:regulation of autophagosome size"/>
    <property type="evidence" value="ECO:0000314"/>
    <property type="project" value="ParkinsonsUK-UCL"/>
</dbReference>
<dbReference type="GO" id="GO:1903146">
    <property type="term" value="P:regulation of autophagy of mitochondrion"/>
    <property type="evidence" value="ECO:0000304"/>
    <property type="project" value="ParkinsonsUK-UCL"/>
</dbReference>
<dbReference type="GO" id="GO:1904714">
    <property type="term" value="P:regulation of chaperone-mediated autophagy"/>
    <property type="evidence" value="ECO:0000304"/>
    <property type="project" value="ParkinsonsUK-UCL"/>
</dbReference>
<dbReference type="GO" id="GO:0033157">
    <property type="term" value="P:regulation of intracellular protein transport"/>
    <property type="evidence" value="ECO:0000303"/>
    <property type="project" value="ParkinsonsUK-UCL"/>
</dbReference>
<dbReference type="GO" id="GO:1905165">
    <property type="term" value="P:regulation of lysosomal protein catabolic process"/>
    <property type="evidence" value="ECO:0000315"/>
    <property type="project" value="ParkinsonsUK-UCL"/>
</dbReference>
<dbReference type="GO" id="GO:0016241">
    <property type="term" value="P:regulation of macroautophagy"/>
    <property type="evidence" value="ECO:0000315"/>
    <property type="project" value="ParkinsonsUK-UCL"/>
</dbReference>
<dbReference type="GO" id="GO:0010821">
    <property type="term" value="P:regulation of mitochondrion organization"/>
    <property type="evidence" value="ECO:0000314"/>
    <property type="project" value="ParkinsonsUK-UCL"/>
</dbReference>
<dbReference type="GO" id="GO:0043523">
    <property type="term" value="P:regulation of neuron apoptotic process"/>
    <property type="evidence" value="ECO:0000250"/>
    <property type="project" value="ParkinsonsUK-UCL"/>
</dbReference>
<dbReference type="GO" id="GO:1900180">
    <property type="term" value="P:regulation of protein localization to nucleus"/>
    <property type="evidence" value="ECO:0000315"/>
    <property type="project" value="UniProtKB"/>
</dbReference>
<dbReference type="GO" id="GO:2000152">
    <property type="term" value="P:regulation of ubiquitin-specific protease activity"/>
    <property type="evidence" value="ECO:0000315"/>
    <property type="project" value="UniProtKB"/>
</dbReference>
<dbReference type="GO" id="GO:1903710">
    <property type="term" value="P:spermine transmembrane transport"/>
    <property type="evidence" value="ECO:0000315"/>
    <property type="project" value="UniProtKB"/>
</dbReference>
<dbReference type="CDD" id="cd07542">
    <property type="entry name" value="P-type_ATPase_cation"/>
    <property type="match status" value="1"/>
</dbReference>
<dbReference type="FunFam" id="1.20.1110.10:FF:000023">
    <property type="entry name" value="Cation-transporting ATPase"/>
    <property type="match status" value="1"/>
</dbReference>
<dbReference type="FunFam" id="2.70.150.10:FF:000060">
    <property type="entry name" value="Cation-transporting ATPase"/>
    <property type="match status" value="1"/>
</dbReference>
<dbReference type="FunFam" id="3.40.1110.10:FF:000026">
    <property type="entry name" value="Cation-transporting ATPase"/>
    <property type="match status" value="1"/>
</dbReference>
<dbReference type="FunFam" id="3.40.50.1000:FF:000068">
    <property type="entry name" value="Cation-transporting ATPase"/>
    <property type="match status" value="1"/>
</dbReference>
<dbReference type="Gene3D" id="3.40.1110.10">
    <property type="entry name" value="Calcium-transporting ATPase, cytoplasmic domain N"/>
    <property type="match status" value="1"/>
</dbReference>
<dbReference type="Gene3D" id="2.70.150.10">
    <property type="entry name" value="Calcium-transporting ATPase, cytoplasmic transduction domain A"/>
    <property type="match status" value="1"/>
</dbReference>
<dbReference type="Gene3D" id="1.20.1110.10">
    <property type="entry name" value="Calcium-transporting ATPase, transmembrane domain"/>
    <property type="match status" value="1"/>
</dbReference>
<dbReference type="Gene3D" id="3.40.50.1000">
    <property type="entry name" value="HAD superfamily/HAD-like"/>
    <property type="match status" value="1"/>
</dbReference>
<dbReference type="InterPro" id="IPR023299">
    <property type="entry name" value="ATPase_P-typ_cyto_dom_N"/>
</dbReference>
<dbReference type="InterPro" id="IPR018303">
    <property type="entry name" value="ATPase_P-typ_P_site"/>
</dbReference>
<dbReference type="InterPro" id="IPR023298">
    <property type="entry name" value="ATPase_P-typ_TM_dom_sf"/>
</dbReference>
<dbReference type="InterPro" id="IPR008250">
    <property type="entry name" value="ATPase_P-typ_transduc_dom_A_sf"/>
</dbReference>
<dbReference type="InterPro" id="IPR036412">
    <property type="entry name" value="HAD-like_sf"/>
</dbReference>
<dbReference type="InterPro" id="IPR023214">
    <property type="entry name" value="HAD_sf"/>
</dbReference>
<dbReference type="InterPro" id="IPR006544">
    <property type="entry name" value="P-type_TPase_V"/>
</dbReference>
<dbReference type="InterPro" id="IPR047819">
    <property type="entry name" value="P5A-ATPase_N"/>
</dbReference>
<dbReference type="InterPro" id="IPR047821">
    <property type="entry name" value="P5B-type_ATPase"/>
</dbReference>
<dbReference type="InterPro" id="IPR001757">
    <property type="entry name" value="P_typ_ATPase"/>
</dbReference>
<dbReference type="InterPro" id="IPR044492">
    <property type="entry name" value="P_typ_ATPase_HD_dom"/>
</dbReference>
<dbReference type="NCBIfam" id="TIGR01494">
    <property type="entry name" value="ATPase_P-type"/>
    <property type="match status" value="2"/>
</dbReference>
<dbReference type="NCBIfam" id="TIGR01657">
    <property type="entry name" value="P-ATPase-V"/>
    <property type="match status" value="1"/>
</dbReference>
<dbReference type="PANTHER" id="PTHR45630">
    <property type="entry name" value="CATION-TRANSPORTING ATPASE-RELATED"/>
    <property type="match status" value="1"/>
</dbReference>
<dbReference type="PANTHER" id="PTHR45630:SF2">
    <property type="entry name" value="POLYAMINE-TRANSPORTING ATPASE 13A2"/>
    <property type="match status" value="1"/>
</dbReference>
<dbReference type="Pfam" id="PF00122">
    <property type="entry name" value="E1-E2_ATPase"/>
    <property type="match status" value="1"/>
</dbReference>
<dbReference type="Pfam" id="PF12409">
    <property type="entry name" value="P5-ATPase"/>
    <property type="match status" value="1"/>
</dbReference>
<dbReference type="PRINTS" id="PR00119">
    <property type="entry name" value="CATATPASE"/>
</dbReference>
<dbReference type="SFLD" id="SFLDG00002">
    <property type="entry name" value="C1.7:_P-type_atpase_like"/>
    <property type="match status" value="1"/>
</dbReference>
<dbReference type="SFLD" id="SFLDF00027">
    <property type="entry name" value="p-type_atpase"/>
    <property type="match status" value="1"/>
</dbReference>
<dbReference type="SUPFAM" id="SSF81653">
    <property type="entry name" value="Calcium ATPase, transduction domain A"/>
    <property type="match status" value="1"/>
</dbReference>
<dbReference type="SUPFAM" id="SSF81665">
    <property type="entry name" value="Calcium ATPase, transmembrane domain M"/>
    <property type="match status" value="1"/>
</dbReference>
<dbReference type="SUPFAM" id="SSF56784">
    <property type="entry name" value="HAD-like"/>
    <property type="match status" value="1"/>
</dbReference>
<dbReference type="SUPFAM" id="SSF81660">
    <property type="entry name" value="Metal cation-transporting ATPase, ATP-binding domain N"/>
    <property type="match status" value="1"/>
</dbReference>
<dbReference type="PROSITE" id="PS00154">
    <property type="entry name" value="ATPASE_E1_E2"/>
    <property type="match status" value="1"/>
</dbReference>
<protein>
    <recommendedName>
        <fullName evidence="34">Polyamine-transporting ATPase 13A2</fullName>
        <ecNumber evidence="24">7.6.2.-</ecNumber>
    </recommendedName>
</protein>
<evidence type="ECO:0000250" key="1"/>
<evidence type="ECO:0000255" key="2"/>
<evidence type="ECO:0000269" key="3">
    <source>
    </source>
</evidence>
<evidence type="ECO:0000269" key="4">
    <source>
    </source>
</evidence>
<evidence type="ECO:0000269" key="5">
    <source>
    </source>
</evidence>
<evidence type="ECO:0000269" key="6">
    <source>
    </source>
</evidence>
<evidence type="ECO:0000269" key="7">
    <source>
    </source>
</evidence>
<evidence type="ECO:0000269" key="8">
    <source>
    </source>
</evidence>
<evidence type="ECO:0000269" key="9">
    <source>
    </source>
</evidence>
<evidence type="ECO:0000269" key="10">
    <source>
    </source>
</evidence>
<evidence type="ECO:0000269" key="11">
    <source>
    </source>
</evidence>
<evidence type="ECO:0000269" key="12">
    <source>
    </source>
</evidence>
<evidence type="ECO:0000269" key="13">
    <source>
    </source>
</evidence>
<evidence type="ECO:0000269" key="14">
    <source>
    </source>
</evidence>
<evidence type="ECO:0000269" key="15">
    <source>
    </source>
</evidence>
<evidence type="ECO:0000269" key="16">
    <source>
    </source>
</evidence>
<evidence type="ECO:0000269" key="17">
    <source>
    </source>
</evidence>
<evidence type="ECO:0000269" key="18">
    <source>
    </source>
</evidence>
<evidence type="ECO:0000269" key="19">
    <source>
    </source>
</evidence>
<evidence type="ECO:0000269" key="20">
    <source>
    </source>
</evidence>
<evidence type="ECO:0000269" key="21">
    <source>
    </source>
</evidence>
<evidence type="ECO:0000269" key="22">
    <source>
    </source>
</evidence>
<evidence type="ECO:0000269" key="23">
    <source>
    </source>
</evidence>
<evidence type="ECO:0000269" key="24">
    <source>
    </source>
</evidence>
<evidence type="ECO:0000269" key="25">
    <source>
    </source>
</evidence>
<evidence type="ECO:0000303" key="26">
    <source>
    </source>
</evidence>
<evidence type="ECO:0000303" key="27">
    <source>
    </source>
</evidence>
<evidence type="ECO:0000303" key="28">
    <source>
    </source>
</evidence>
<evidence type="ECO:0000303" key="29">
    <source ref="2"/>
</evidence>
<evidence type="ECO:0000303" key="30">
    <source ref="8"/>
</evidence>
<evidence type="ECO:0000305" key="31"/>
<evidence type="ECO:0000305" key="32">
    <source>
    </source>
</evidence>
<evidence type="ECO:0000305" key="33">
    <source>
    </source>
</evidence>
<evidence type="ECO:0000305" key="34">
    <source>
    </source>
</evidence>
<evidence type="ECO:0000312" key="35">
    <source>
        <dbReference type="HGNC" id="HGNC:30213"/>
    </source>
</evidence>
<evidence type="ECO:0007744" key="36">
    <source>
    </source>
</evidence>
<evidence type="ECO:0007829" key="37">
    <source>
        <dbReference type="PDB" id="7FJM"/>
    </source>
</evidence>
<evidence type="ECO:0007829" key="38">
    <source>
        <dbReference type="PDB" id="7FJP"/>
    </source>
</evidence>
<evidence type="ECO:0007829" key="39">
    <source>
        <dbReference type="PDB" id="7M5V"/>
    </source>
</evidence>
<evidence type="ECO:0007829" key="40">
    <source>
        <dbReference type="PDB" id="7M5X"/>
    </source>
</evidence>
<evidence type="ECO:0007829" key="41">
    <source>
        <dbReference type="PDB" id="7N70"/>
    </source>
</evidence>
<evidence type="ECO:0007829" key="42">
    <source>
        <dbReference type="PDB" id="7N72"/>
    </source>
</evidence>
<evidence type="ECO:0007829" key="43">
    <source>
        <dbReference type="PDB" id="7N73"/>
    </source>
</evidence>
<evidence type="ECO:0007829" key="44">
    <source>
        <dbReference type="PDB" id="7N74"/>
    </source>
</evidence>
<feature type="chain" id="PRO_0000046423" description="Polyamine-transporting ATPase 13A2">
    <location>
        <begin position="1"/>
        <end position="1180"/>
    </location>
</feature>
<feature type="topological domain" description="Cytoplasmic" evidence="32">
    <location>
        <begin position="1"/>
        <end position="44"/>
    </location>
</feature>
<feature type="intramembrane region" evidence="2">
    <location>
        <begin position="45"/>
        <end position="65"/>
    </location>
</feature>
<feature type="topological domain" description="Cytoplasmic" evidence="32">
    <location>
        <begin position="66"/>
        <end position="235"/>
    </location>
</feature>
<feature type="transmembrane region" description="Helical" evidence="2">
    <location>
        <begin position="236"/>
        <end position="253"/>
    </location>
</feature>
<feature type="topological domain" description="Lumenal" evidence="32">
    <location>
        <begin position="254"/>
        <end position="256"/>
    </location>
</feature>
<feature type="transmembrane region" description="Helical" evidence="2">
    <location>
        <begin position="257"/>
        <end position="276"/>
    </location>
</feature>
<feature type="topological domain" description="Cytoplasmic" evidence="32">
    <location>
        <begin position="277"/>
        <end position="427"/>
    </location>
</feature>
<feature type="transmembrane region" description="Helical" evidence="2">
    <location>
        <begin position="428"/>
        <end position="448"/>
    </location>
</feature>
<feature type="topological domain" description="Lumenal" evidence="32">
    <location>
        <begin position="449"/>
        <end position="463"/>
    </location>
</feature>
<feature type="transmembrane region" description="Helical" evidence="2">
    <location>
        <begin position="464"/>
        <end position="484"/>
    </location>
</feature>
<feature type="topological domain" description="Cytoplasmic" evidence="32">
    <location>
        <begin position="485"/>
        <end position="930"/>
    </location>
</feature>
<feature type="transmembrane region" description="Helical" evidence="2">
    <location>
        <begin position="931"/>
        <end position="951"/>
    </location>
</feature>
<feature type="topological domain" description="Lumenal" evidence="32">
    <location>
        <begin position="952"/>
        <end position="957"/>
    </location>
</feature>
<feature type="transmembrane region" description="Helical" evidence="2">
    <location>
        <begin position="958"/>
        <end position="978"/>
    </location>
</feature>
<feature type="topological domain" description="Cytoplasmic" evidence="32">
    <location>
        <begin position="979"/>
        <end position="994"/>
    </location>
</feature>
<feature type="transmembrane region" description="Helical" evidence="2">
    <location>
        <begin position="995"/>
        <end position="1015"/>
    </location>
</feature>
<feature type="topological domain" description="Lumenal" evidence="32">
    <location>
        <begin position="1016"/>
        <end position="1048"/>
    </location>
</feature>
<feature type="transmembrane region" description="Helical" evidence="2">
    <location>
        <begin position="1049"/>
        <end position="1069"/>
    </location>
</feature>
<feature type="topological domain" description="Cytoplasmic" evidence="32">
    <location>
        <begin position="1070"/>
        <end position="1080"/>
    </location>
</feature>
<feature type="transmembrane region" description="Helical" evidence="2">
    <location>
        <begin position="1081"/>
        <end position="1101"/>
    </location>
</feature>
<feature type="topological domain" description="Lumenal" evidence="32">
    <location>
        <begin position="1102"/>
        <end position="1117"/>
    </location>
</feature>
<feature type="transmembrane region" description="Helical" evidence="2">
    <location>
        <begin position="1118"/>
        <end position="1138"/>
    </location>
</feature>
<feature type="topological domain" description="Cytoplasmic" evidence="32">
    <location>
        <begin position="1139"/>
        <end position="1180"/>
    </location>
</feature>
<feature type="active site" description="4-aspartylphosphate intermediate" evidence="17">
    <location>
        <position position="513"/>
    </location>
</feature>
<feature type="binding site" evidence="1">
    <location>
        <position position="878"/>
    </location>
    <ligand>
        <name>Mg(2+)</name>
        <dbReference type="ChEBI" id="CHEBI:18420"/>
    </ligand>
</feature>
<feature type="binding site" evidence="1">
    <location>
        <position position="882"/>
    </location>
    <ligand>
        <name>Mg(2+)</name>
        <dbReference type="ChEBI" id="CHEBI:18420"/>
    </ligand>
</feature>
<feature type="modified residue" description="Phosphoserine" evidence="36">
    <location>
        <position position="151"/>
    </location>
</feature>
<feature type="glycosylation site" description="N-linked (GlcNAc...) asparagine" evidence="17">
    <location>
        <position position="1033"/>
    </location>
</feature>
<feature type="glycosylation site" description="N-linked (GlcNAc...) asparagine" evidence="2">
    <location>
        <position position="1110"/>
    </location>
</feature>
<feature type="splice variant" id="VSP_007310" description="In isoform B and isoform 3." evidence="26 27 29 30">
    <location>
        <begin position="155"/>
        <end position="159"/>
    </location>
</feature>
<feature type="splice variant" id="VSP_007311" description="In isoform B." evidence="27 30">
    <location>
        <begin position="805"/>
        <end position="843"/>
    </location>
</feature>
<feature type="splice variant" id="VSP_007312" description="In isoform B." evidence="27 30">
    <original>VPFLVALALLSSVLVGLVLVPGLLQGPLALRNITDTGFKLLLLGLVTLNFVGAFMLESVLDQCLPACLRRLRPKRASKKRFKQLERELAEQPWPPLPAGPLR</original>
    <variation>ERARPVPPRLPAPPPAQAGLQEALQAAGTRAGRAALAAAARRPPEVVQAHGHPRHWNSLPLSHQLDPSPATPPPPPPTSLRLATVYTPPPRPPPPWGSVDYCPLPWTIPRRGGSPQLPSVLLSV</variation>
    <location>
        <begin position="1079"/>
        <end position="1180"/>
    </location>
</feature>
<feature type="sequence variant" id="VAR_058451" description="In KRS; uncertain significance; no effect on stability; no effect on location; decreased ATPase activity; dbSNP:rs151117874." evidence="4 14 24">
    <original>T</original>
    <variation>M</variation>
    <location>
        <position position="12"/>
    </location>
</feature>
<feature type="sequence variant" id="VAR_058452" description="In dbSNP:rs56379718." evidence="7">
    <original>G</original>
    <variation>S</variation>
    <location>
        <position position="49"/>
    </location>
</feature>
<feature type="sequence variant" id="VAR_066019" description="In KRS; decreased protein stability; loss of autophosphorylation; increased degradation by proteasome; novel location to endoplasmic reticulum; loss of lysosomal membrane location; impaired autophagosome-lysosome fusion; impaired degradation of protein aggregates." evidence="5 14 20 22">
    <original>F</original>
    <variation>L</variation>
    <location>
        <position position="182"/>
    </location>
</feature>
<feature type="sequence variant" id="VAR_058453" description="In dbSNP:rs56367069." evidence="7">
    <original>R</original>
    <variation>Q</variation>
    <location>
        <position position="294"/>
    </location>
</feature>
<feature type="sequence variant" id="VAR_058454" description="In dbSNP:rs56275621." evidence="7">
    <original>P</original>
    <variation>L</variation>
    <location>
        <position position="389"/>
    </location>
</feature>
<feature type="sequence variant" id="VAR_083537" description="In KRS; uncertain significance; associated in cis with Thr-1069 in one individual; dbSNP:rs772446950." evidence="21">
    <original>I</original>
    <variation>F</variation>
    <location>
        <position position="441"/>
    </location>
</feature>
<feature type="sequence variant" id="VAR_058455" description="In KRS; decreased protein stability; increased degradation by proteasome; novel location to endoplasmic reticulum; loss of lysosomal membrane location; impaired autophagosome-lysosome fusion; impaired degradation of protein aggregates; dbSNP:rs121918227." evidence="4 14 22">
    <original>G</original>
    <variation>R</variation>
    <location>
        <position position="504"/>
    </location>
</feature>
<feature type="sequence variant" id="VAR_078055" description="In SPG78; no effect on protein stability; loss of autophosphorylation; loss of lysosomal location; loss of ATPase activity; dbSNP:rs1057519291." evidence="20 24">
    <original>T</original>
    <variation>I</variation>
    <location>
        <position position="517"/>
    </location>
</feature>
<feature type="sequence variant" id="VAR_078056" description="In KRS; uncertain significance." evidence="12">
    <original>G</original>
    <variation>V</variation>
    <location>
        <position position="522"/>
    </location>
</feature>
<feature type="sequence variant" id="VAR_058456" description="In KRS; uncertain significance; decreased ATPase activity; no effect on autophosphorylation; no effect on stability; no effect on location." evidence="4 14 20 24">
    <original>G</original>
    <variation>R</variation>
    <location>
        <position position="533"/>
    </location>
</feature>
<feature type="sequence variant" id="VAR_058457" description="In dbSNP:rs56186751." evidence="7">
    <original>V</original>
    <variation>G</variation>
    <location>
        <position position="578"/>
    </location>
</feature>
<feature type="sequence variant" id="VAR_058458" description="In KRS; decreased ATPase activity; no effect on stability; no effect on location; dbSNP:rs147277743." evidence="6 14 24">
    <original>A</original>
    <variation>T</variation>
    <location>
        <position position="746"/>
    </location>
</feature>
<feature type="sequence variant" id="VAR_058459" description="In dbSNP:rs55635527." evidence="7">
    <original>R</original>
    <variation>W</variation>
    <location>
        <position position="762"/>
    </location>
</feature>
<feature type="sequence variant" id="VAR_058460" description="In dbSNP:rs56170027." evidence="7">
    <original>V</original>
    <variation>I</variation>
    <location>
        <position position="776"/>
    </location>
</feature>
<feature type="sequence variant" id="VAR_070194" description="In KRS; some patients manifest neuropathologic findings suggestive of neuronal ceroid lipofuscinosis; dbSNP:rs587777053." evidence="13">
    <original>M</original>
    <variation>R</variation>
    <location>
        <position position="854"/>
    </location>
</feature>
<feature type="sequence variant" id="VAR_066020" description="In KRS; found in two affected brothers also carrying C-481 in FBXO7; decreased protein stability; increased degradation by proteasome; novel location to endoplasmic reticulum; loss of ATPase activity; loss of autophosphorylation; dbSNP:rs144701072." evidence="9 14 24">
    <original>G</original>
    <variation>R</variation>
    <location>
        <position position="877"/>
    </location>
</feature>
<feature type="sequence variant" id="VAR_089312" description="In SPG78; uncertain significance; contrary to the wild type, it does not localize to LAMP1-positive cytoplasmic vesicles." evidence="25">
    <original>L</original>
    <variation>P</variation>
    <location>
        <position position="927"/>
    </location>
</feature>
<feature type="sequence variant" id="VAR_058461" description="In dbSNP:rs55708915." evidence="7">
    <original>I</original>
    <variation>F</variation>
    <location>
        <position position="946"/>
    </location>
</feature>
<feature type="sequence variant" id="VAR_066021" description="In KRS; the mutant protein is retained in the endoplasmic reticulum; dbSNP:rs137853967." evidence="10">
    <original>L</original>
    <variation>R</variation>
    <location>
        <position position="1059"/>
    </location>
</feature>
<feature type="sequence variant" id="VAR_083538" description="In KRS; uncertain significance; associated in cis with Phe-441 in one individual; dbSNP:rs774238872." evidence="21">
    <original>A</original>
    <variation>T</variation>
    <location>
        <position position="1069"/>
    </location>
</feature>
<feature type="mutagenesis site" description="No effect on lipid binding." evidence="17">
    <original>G</original>
    <variation>A</variation>
    <location>
        <position position="59"/>
    </location>
</feature>
<feature type="mutagenesis site" description="Reduces lipid binding." evidence="17">
    <original>RWK</original>
    <variation>AWA</variation>
    <location>
        <begin position="66"/>
        <end position="68"/>
    </location>
</feature>
<feature type="mutagenesis site" description="Reduces lipid binding." evidence="17">
    <original>RLRLR</original>
    <variation>ALALA</variation>
    <location>
        <begin position="74"/>
        <end position="78"/>
    </location>
</feature>
<feature type="mutagenesis site" description="Reduces lipid binding." evidence="17">
    <original>KRVLR</original>
    <variation>AAVLA</variation>
    <location>
        <begin position="160"/>
        <end position="164"/>
    </location>
</feature>
<feature type="mutagenesis site" description="Autophosphorylated but displays limited spermine-induced ATPase activity and lacks spermine-induced dephosphorylation." evidence="24">
    <original>E</original>
    <variation>A</variation>
    <location>
        <position position="348"/>
    </location>
</feature>
<feature type="mutagenesis site" description="Reduced spermine-induced ATPase activity and lack of spermine-induced dephosphorylation." evidence="24">
    <original>A</original>
    <variation>V</variation>
    <location>
        <position position="472"/>
    </location>
</feature>
<feature type="mutagenesis site" description="Loss of ATPase function, autophosphorylation and protection against mitochondrial stress." evidence="17 20 24">
    <original>D</original>
    <variation>N</variation>
    <location>
        <position position="513"/>
    </location>
</feature>
<feature type="mutagenesis site" description="Reduced spermine-induced ATPase activity." evidence="24">
    <original>D</original>
    <variation>N</variation>
    <location>
        <position position="967"/>
    </location>
</feature>
<feature type="mutagenesis site" description="Abolishes glycosylation." evidence="17">
    <original>N</original>
    <variation>A</variation>
    <location>
        <position position="1033"/>
    </location>
</feature>
<feature type="mutagenesis site" description="Reduced spermine-induced ATPase activity." evidence="24">
    <original>K</original>
    <variation>A</variation>
    <location>
        <position position="1067"/>
    </location>
</feature>
<feature type="sequence conflict" description="In Ref. 6; AAH30267." evidence="31" ref="6">
    <original>Q</original>
    <variation>R</variation>
    <location>
        <position position="322"/>
    </location>
</feature>
<feature type="sequence conflict" description="In Ref. 8; CAA08912." evidence="31" ref="8">
    <original>APEQ</original>
    <variation>IPRA</variation>
    <location>
        <begin position="855"/>
        <end position="858"/>
    </location>
</feature>
<feature type="sequence conflict" description="In Ref. 8; CAA08912." evidence="31" ref="8">
    <original>E</original>
    <variation>V</variation>
    <location>
        <position position="861"/>
    </location>
</feature>
<feature type="strand" evidence="42">
    <location>
        <begin position="36"/>
        <end position="41"/>
    </location>
</feature>
<feature type="helix" evidence="42">
    <location>
        <begin position="44"/>
        <end position="55"/>
    </location>
</feature>
<feature type="helix" evidence="42">
    <location>
        <begin position="60"/>
        <end position="67"/>
    </location>
</feature>
<feature type="helix" evidence="42">
    <location>
        <begin position="69"/>
        <end position="76"/>
    </location>
</feature>
<feature type="strand" evidence="42">
    <location>
        <begin position="77"/>
        <end position="79"/>
    </location>
</feature>
<feature type="turn" evidence="42">
    <location>
        <begin position="82"/>
        <end position="84"/>
    </location>
</feature>
<feature type="strand" evidence="42">
    <location>
        <begin position="86"/>
        <end position="91"/>
    </location>
</feature>
<feature type="strand" evidence="42">
    <location>
        <begin position="102"/>
        <end position="106"/>
    </location>
</feature>
<feature type="strand" evidence="40">
    <location>
        <begin position="109"/>
        <end position="111"/>
    </location>
</feature>
<feature type="turn" evidence="38">
    <location>
        <begin position="117"/>
        <end position="119"/>
    </location>
</feature>
<feature type="helix" evidence="38">
    <location>
        <begin position="120"/>
        <end position="123"/>
    </location>
</feature>
<feature type="helix" evidence="38">
    <location>
        <begin position="130"/>
        <end position="132"/>
    </location>
</feature>
<feature type="strand" evidence="38">
    <location>
        <begin position="134"/>
        <end position="136"/>
    </location>
</feature>
<feature type="strand" evidence="37">
    <location>
        <begin position="147"/>
        <end position="149"/>
    </location>
</feature>
<feature type="strand" evidence="38">
    <location>
        <begin position="159"/>
        <end position="161"/>
    </location>
</feature>
<feature type="strand" evidence="42">
    <location>
        <begin position="164"/>
        <end position="168"/>
    </location>
</feature>
<feature type="strand" evidence="42">
    <location>
        <begin position="171"/>
        <end position="176"/>
    </location>
</feature>
<feature type="turn" evidence="42">
    <location>
        <begin position="177"/>
        <end position="180"/>
    </location>
</feature>
<feature type="strand" evidence="42">
    <location>
        <begin position="181"/>
        <end position="184"/>
    </location>
</feature>
<feature type="helix" evidence="42">
    <location>
        <begin position="185"/>
        <end position="187"/>
    </location>
</feature>
<feature type="turn" evidence="42">
    <location>
        <begin position="188"/>
        <end position="191"/>
    </location>
</feature>
<feature type="helix" evidence="42">
    <location>
        <begin position="194"/>
        <end position="199"/>
    </location>
</feature>
<feature type="helix" evidence="42">
    <location>
        <begin position="200"/>
        <end position="202"/>
    </location>
</feature>
<feature type="helix" evidence="42">
    <location>
        <begin position="206"/>
        <end position="216"/>
    </location>
</feature>
<feature type="helix" evidence="42">
    <location>
        <begin position="228"/>
        <end position="235"/>
    </location>
</feature>
<feature type="helix" evidence="42">
    <location>
        <begin position="239"/>
        <end position="253"/>
    </location>
</feature>
<feature type="strand" evidence="37">
    <location>
        <begin position="254"/>
        <end position="256"/>
    </location>
</feature>
<feature type="helix" evidence="42">
    <location>
        <begin position="257"/>
        <end position="289"/>
    </location>
</feature>
<feature type="strand" evidence="42">
    <location>
        <begin position="294"/>
        <end position="299"/>
    </location>
</feature>
<feature type="turn" evidence="42">
    <location>
        <begin position="300"/>
        <end position="302"/>
    </location>
</feature>
<feature type="strand" evidence="42">
    <location>
        <begin position="303"/>
        <end position="308"/>
    </location>
</feature>
<feature type="helix" evidence="42">
    <location>
        <begin position="309"/>
        <end position="311"/>
    </location>
</feature>
<feature type="strand" evidence="42">
    <location>
        <begin position="317"/>
        <end position="320"/>
    </location>
</feature>
<feature type="strand" evidence="42">
    <location>
        <begin position="329"/>
        <end position="341"/>
    </location>
</feature>
<feature type="helix" evidence="42">
    <location>
        <begin position="343"/>
        <end position="346"/>
    </location>
</feature>
<feature type="strand" evidence="42">
    <location>
        <begin position="350"/>
        <end position="355"/>
    </location>
</feature>
<feature type="strand" evidence="42">
    <location>
        <begin position="361"/>
        <end position="363"/>
    </location>
</feature>
<feature type="turn" evidence="42">
    <location>
        <begin position="366"/>
        <end position="369"/>
    </location>
</feature>
<feature type="helix" evidence="42">
    <location>
        <begin position="370"/>
        <end position="372"/>
    </location>
</feature>
<feature type="strand" evidence="42">
    <location>
        <begin position="379"/>
        <end position="384"/>
    </location>
</feature>
<feature type="strand" evidence="42">
    <location>
        <begin position="386"/>
        <end position="397"/>
    </location>
</feature>
<feature type="helix" evidence="42">
    <location>
        <begin position="399"/>
        <end position="401"/>
    </location>
</feature>
<feature type="helix" evidence="42">
    <location>
        <begin position="403"/>
        <end position="412"/>
    </location>
</feature>
<feature type="helix" evidence="42">
    <location>
        <begin position="422"/>
        <end position="449"/>
    </location>
</feature>
<feature type="helix" evidence="42">
    <location>
        <begin position="454"/>
        <end position="468"/>
    </location>
</feature>
<feature type="helix" evidence="42">
    <location>
        <begin position="473"/>
        <end position="491"/>
    </location>
</feature>
<feature type="strand" evidence="42">
    <location>
        <begin position="493"/>
        <end position="497"/>
    </location>
</feature>
<feature type="helix" evidence="42">
    <location>
        <begin position="498"/>
        <end position="505"/>
    </location>
</feature>
<feature type="strand" evidence="42">
    <location>
        <begin position="508"/>
        <end position="512"/>
    </location>
</feature>
<feature type="turn" evidence="42">
    <location>
        <begin position="516"/>
        <end position="518"/>
    </location>
</feature>
<feature type="strand" evidence="42">
    <location>
        <begin position="524"/>
        <end position="529"/>
    </location>
</feature>
<feature type="strand" evidence="38">
    <location>
        <begin position="532"/>
        <end position="534"/>
    </location>
</feature>
<feature type="strand" evidence="40">
    <location>
        <begin position="540"/>
        <end position="542"/>
    </location>
</feature>
<feature type="helix" evidence="42">
    <location>
        <begin position="543"/>
        <end position="545"/>
    </location>
</feature>
<feature type="helix" evidence="42">
    <location>
        <begin position="550"/>
        <end position="557"/>
    </location>
</feature>
<feature type="strand" evidence="42">
    <location>
        <begin position="562"/>
        <end position="564"/>
    </location>
</feature>
<feature type="strand" evidence="42">
    <location>
        <begin position="567"/>
        <end position="570"/>
    </location>
</feature>
<feature type="helix" evidence="42">
    <location>
        <begin position="572"/>
        <end position="581"/>
    </location>
</feature>
<feature type="strand" evidence="40">
    <location>
        <begin position="584"/>
        <end position="586"/>
    </location>
</feature>
<feature type="strand" evidence="42">
    <location>
        <begin position="593"/>
        <end position="596"/>
    </location>
</feature>
<feature type="strand" evidence="40">
    <location>
        <begin position="602"/>
        <end position="604"/>
    </location>
</feature>
<feature type="turn" evidence="39">
    <location>
        <begin position="610"/>
        <end position="612"/>
    </location>
</feature>
<feature type="helix" evidence="39">
    <location>
        <begin position="613"/>
        <end position="615"/>
    </location>
</feature>
<feature type="strand" evidence="42">
    <location>
        <begin position="622"/>
        <end position="628"/>
    </location>
</feature>
<feature type="turn" evidence="42">
    <location>
        <begin position="632"/>
        <end position="634"/>
    </location>
</feature>
<feature type="strand" evidence="42">
    <location>
        <begin position="636"/>
        <end position="642"/>
    </location>
</feature>
<feature type="strand" evidence="42">
    <location>
        <begin position="650"/>
        <end position="655"/>
    </location>
</feature>
<feature type="helix" evidence="42">
    <location>
        <begin position="657"/>
        <end position="660"/>
    </location>
</feature>
<feature type="turn" evidence="42">
    <location>
        <begin position="661"/>
        <end position="663"/>
    </location>
</feature>
<feature type="turn" evidence="42">
    <location>
        <begin position="666"/>
        <end position="668"/>
    </location>
</feature>
<feature type="helix" evidence="42">
    <location>
        <begin position="673"/>
        <end position="681"/>
    </location>
</feature>
<feature type="turn" evidence="42">
    <location>
        <begin position="682"/>
        <end position="684"/>
    </location>
</feature>
<feature type="strand" evidence="42">
    <location>
        <begin position="686"/>
        <end position="694"/>
    </location>
</feature>
<feature type="helix" evidence="42">
    <location>
        <begin position="701"/>
        <end position="704"/>
    </location>
</feature>
<feature type="helix" evidence="42">
    <location>
        <begin position="709"/>
        <end position="713"/>
    </location>
</feature>
<feature type="strand" evidence="42">
    <location>
        <begin position="714"/>
        <end position="725"/>
    </location>
</feature>
<feature type="helix" evidence="42">
    <location>
        <begin position="732"/>
        <end position="741"/>
    </location>
</feature>
<feature type="strand" evidence="42">
    <location>
        <begin position="745"/>
        <end position="749"/>
    </location>
</feature>
<feature type="helix" evidence="42">
    <location>
        <begin position="754"/>
        <end position="763"/>
    </location>
</feature>
<feature type="strand" evidence="41">
    <location>
        <begin position="765"/>
        <end position="767"/>
    </location>
</feature>
<feature type="strand" evidence="42">
    <location>
        <begin position="771"/>
        <end position="779"/>
    </location>
</feature>
<feature type="strand" evidence="40">
    <location>
        <begin position="783"/>
        <end position="785"/>
    </location>
</feature>
<feature type="strand" evidence="42">
    <location>
        <begin position="788"/>
        <end position="794"/>
    </location>
</feature>
<feature type="strand" evidence="42">
    <location>
        <begin position="821"/>
        <end position="826"/>
    </location>
</feature>
<feature type="helix" evidence="42">
    <location>
        <begin position="827"/>
        <end position="836"/>
    </location>
</feature>
<feature type="turn" evidence="42">
    <location>
        <begin position="838"/>
        <end position="840"/>
    </location>
</feature>
<feature type="helix" evidence="42">
    <location>
        <begin position="841"/>
        <end position="847"/>
    </location>
</feature>
<feature type="strand" evidence="42">
    <location>
        <begin position="848"/>
        <end position="853"/>
    </location>
</feature>
<feature type="helix" evidence="42">
    <location>
        <begin position="856"/>
        <end position="868"/>
    </location>
</feature>
<feature type="strand" evidence="42">
    <location>
        <begin position="873"/>
        <end position="877"/>
    </location>
</feature>
<feature type="helix" evidence="42">
    <location>
        <begin position="880"/>
        <end position="882"/>
    </location>
</feature>
<feature type="helix" evidence="42">
    <location>
        <begin position="883"/>
        <end position="888"/>
    </location>
</feature>
<feature type="strand" evidence="42">
    <location>
        <begin position="889"/>
        <end position="894"/>
    </location>
</feature>
<feature type="strand" evidence="42">
    <location>
        <begin position="897"/>
        <end position="900"/>
    </location>
</feature>
<feature type="turn" evidence="42">
    <location>
        <begin position="901"/>
        <end position="903"/>
    </location>
</feature>
<feature type="strand" evidence="42">
    <location>
        <begin position="905"/>
        <end position="912"/>
    </location>
</feature>
<feature type="helix" evidence="42">
    <location>
        <begin position="915"/>
        <end position="953"/>
    </location>
</feature>
<feature type="helix" evidence="42">
    <location>
        <begin position="960"/>
        <end position="967"/>
    </location>
</feature>
<feature type="helix" evidence="42">
    <location>
        <begin position="969"/>
        <end position="978"/>
    </location>
</feature>
<feature type="strand" evidence="44">
    <location>
        <begin position="995"/>
        <end position="998"/>
    </location>
</feature>
<feature type="helix" evidence="42">
    <location>
        <begin position="999"/>
        <end position="1024"/>
    </location>
</feature>
<feature type="strand" evidence="39">
    <location>
        <begin position="1025"/>
        <end position="1028"/>
    </location>
</feature>
<feature type="strand" evidence="43">
    <location>
        <begin position="1034"/>
        <end position="1036"/>
    </location>
</feature>
<feature type="turn" evidence="42">
    <location>
        <begin position="1038"/>
        <end position="1041"/>
    </location>
</feature>
<feature type="helix" evidence="42">
    <location>
        <begin position="1045"/>
        <end position="1065"/>
    </location>
</feature>
<feature type="turn" evidence="42">
    <location>
        <begin position="1069"/>
        <end position="1071"/>
    </location>
</feature>
<feature type="helix" evidence="42">
    <location>
        <begin position="1075"/>
        <end position="1077"/>
    </location>
</feature>
<feature type="helix" evidence="42">
    <location>
        <begin position="1079"/>
        <end position="1097"/>
    </location>
</feature>
<feature type="strand" evidence="40">
    <location>
        <begin position="1100"/>
        <end position="1102"/>
    </location>
</feature>
<feature type="turn" evidence="42">
    <location>
        <begin position="1103"/>
        <end position="1107"/>
    </location>
</feature>
<feature type="helix" evidence="42">
    <location>
        <begin position="1114"/>
        <end position="1149"/>
    </location>
</feature>
<feature type="helix" evidence="42">
    <location>
        <begin position="1158"/>
        <end position="1168"/>
    </location>
</feature>
<name>AT132_HUMAN</name>
<reference key="1">
    <citation type="submission" date="2000-04" db="EMBL/GenBank/DDBJ databases">
        <authorList>
            <person name="Rhodes S."/>
            <person name="Huckle E."/>
        </authorList>
    </citation>
    <scope>NUCLEOTIDE SEQUENCE [LARGE SCALE MRNA] (ISOFORM A)</scope>
</reference>
<reference key="2">
    <citation type="submission" date="2003-11" db="EMBL/GenBank/DDBJ databases">
        <title>Homo sapiens putative ATPase (N-ATPase) mRNA.</title>
        <authorList>
            <person name="Liu J.-P."/>
            <person name="Li H."/>
        </authorList>
    </citation>
    <scope>NUCLEOTIDE SEQUENCE [MRNA] (ISOFORM 3)</scope>
</reference>
<reference key="3">
    <citation type="journal article" date="2004" name="Nat. Genet.">
        <title>Complete sequencing and characterization of 21,243 full-length human cDNAs.</title>
        <authorList>
            <person name="Ota T."/>
            <person name="Suzuki Y."/>
            <person name="Nishikawa T."/>
            <person name="Otsuki T."/>
            <person name="Sugiyama T."/>
            <person name="Irie R."/>
            <person name="Wakamatsu A."/>
            <person name="Hayashi K."/>
            <person name="Sato H."/>
            <person name="Nagai K."/>
            <person name="Kimura K."/>
            <person name="Makita H."/>
            <person name="Sekine M."/>
            <person name="Obayashi M."/>
            <person name="Nishi T."/>
            <person name="Shibahara T."/>
            <person name="Tanaka T."/>
            <person name="Ishii S."/>
            <person name="Yamamoto J."/>
            <person name="Saito K."/>
            <person name="Kawai Y."/>
            <person name="Isono Y."/>
            <person name="Nakamura Y."/>
            <person name="Nagahari K."/>
            <person name="Murakami K."/>
            <person name="Yasuda T."/>
            <person name="Iwayanagi T."/>
            <person name="Wagatsuma M."/>
            <person name="Shiratori A."/>
            <person name="Sudo H."/>
            <person name="Hosoiri T."/>
            <person name="Kaku Y."/>
            <person name="Kodaira H."/>
            <person name="Kondo H."/>
            <person name="Sugawara M."/>
            <person name="Takahashi M."/>
            <person name="Kanda K."/>
            <person name="Yokoi T."/>
            <person name="Furuya T."/>
            <person name="Kikkawa E."/>
            <person name="Omura Y."/>
            <person name="Abe K."/>
            <person name="Kamihara K."/>
            <person name="Katsuta N."/>
            <person name="Sato K."/>
            <person name="Tanikawa M."/>
            <person name="Yamazaki M."/>
            <person name="Ninomiya K."/>
            <person name="Ishibashi T."/>
            <person name="Yamashita H."/>
            <person name="Murakawa K."/>
            <person name="Fujimori K."/>
            <person name="Tanai H."/>
            <person name="Kimata M."/>
            <person name="Watanabe M."/>
            <person name="Hiraoka S."/>
            <person name="Chiba Y."/>
            <person name="Ishida S."/>
            <person name="Ono Y."/>
            <person name="Takiguchi S."/>
            <person name="Watanabe S."/>
            <person name="Yosida M."/>
            <person name="Hotuta T."/>
            <person name="Kusano J."/>
            <person name="Kanehori K."/>
            <person name="Takahashi-Fujii A."/>
            <person name="Hara H."/>
            <person name="Tanase T.-O."/>
            <person name="Nomura Y."/>
            <person name="Togiya S."/>
            <person name="Komai F."/>
            <person name="Hara R."/>
            <person name="Takeuchi K."/>
            <person name="Arita M."/>
            <person name="Imose N."/>
            <person name="Musashino K."/>
            <person name="Yuuki H."/>
            <person name="Oshima A."/>
            <person name="Sasaki N."/>
            <person name="Aotsuka S."/>
            <person name="Yoshikawa Y."/>
            <person name="Matsunawa H."/>
            <person name="Ichihara T."/>
            <person name="Shiohata N."/>
            <person name="Sano S."/>
            <person name="Moriya S."/>
            <person name="Momiyama H."/>
            <person name="Satoh N."/>
            <person name="Takami S."/>
            <person name="Terashima Y."/>
            <person name="Suzuki O."/>
            <person name="Nakagawa S."/>
            <person name="Senoh A."/>
            <person name="Mizoguchi H."/>
            <person name="Goto Y."/>
            <person name="Shimizu F."/>
            <person name="Wakebe H."/>
            <person name="Hishigaki H."/>
            <person name="Watanabe T."/>
            <person name="Sugiyama A."/>
            <person name="Takemoto M."/>
            <person name="Kawakami B."/>
            <person name="Yamazaki M."/>
            <person name="Watanabe K."/>
            <person name="Kumagai A."/>
            <person name="Itakura S."/>
            <person name="Fukuzumi Y."/>
            <person name="Fujimori Y."/>
            <person name="Komiyama M."/>
            <person name="Tashiro H."/>
            <person name="Tanigami A."/>
            <person name="Fujiwara T."/>
            <person name="Ono T."/>
            <person name="Yamada K."/>
            <person name="Fujii Y."/>
            <person name="Ozaki K."/>
            <person name="Hirao M."/>
            <person name="Ohmori Y."/>
            <person name="Kawabata A."/>
            <person name="Hikiji T."/>
            <person name="Kobatake N."/>
            <person name="Inagaki H."/>
            <person name="Ikema Y."/>
            <person name="Okamoto S."/>
            <person name="Okitani R."/>
            <person name="Kawakami T."/>
            <person name="Noguchi S."/>
            <person name="Itoh T."/>
            <person name="Shigeta K."/>
            <person name="Senba T."/>
            <person name="Matsumura K."/>
            <person name="Nakajima Y."/>
            <person name="Mizuno T."/>
            <person name="Morinaga M."/>
            <person name="Sasaki M."/>
            <person name="Togashi T."/>
            <person name="Oyama M."/>
            <person name="Hata H."/>
            <person name="Watanabe M."/>
            <person name="Komatsu T."/>
            <person name="Mizushima-Sugano J."/>
            <person name="Satoh T."/>
            <person name="Shirai Y."/>
            <person name="Takahashi Y."/>
            <person name="Nakagawa K."/>
            <person name="Okumura K."/>
            <person name="Nagase T."/>
            <person name="Nomura N."/>
            <person name="Kikuchi H."/>
            <person name="Masuho Y."/>
            <person name="Yamashita R."/>
            <person name="Nakai K."/>
            <person name="Yada T."/>
            <person name="Nakamura Y."/>
            <person name="Ohara O."/>
            <person name="Isogai T."/>
            <person name="Sugano S."/>
        </authorList>
    </citation>
    <scope>NUCLEOTIDE SEQUENCE [LARGE SCALE MRNA] (ISOFORM 3)</scope>
    <source>
        <tissue>Thalamus</tissue>
    </source>
</reference>
<reference key="4">
    <citation type="journal article" date="2006" name="Nature">
        <title>The DNA sequence and biological annotation of human chromosome 1.</title>
        <authorList>
            <person name="Gregory S.G."/>
            <person name="Barlow K.F."/>
            <person name="McLay K.E."/>
            <person name="Kaul R."/>
            <person name="Swarbreck D."/>
            <person name="Dunham A."/>
            <person name="Scott C.E."/>
            <person name="Howe K.L."/>
            <person name="Woodfine K."/>
            <person name="Spencer C.C.A."/>
            <person name="Jones M.C."/>
            <person name="Gillson C."/>
            <person name="Searle S."/>
            <person name="Zhou Y."/>
            <person name="Kokocinski F."/>
            <person name="McDonald L."/>
            <person name="Evans R."/>
            <person name="Phillips K."/>
            <person name="Atkinson A."/>
            <person name="Cooper R."/>
            <person name="Jones C."/>
            <person name="Hall R.E."/>
            <person name="Andrews T.D."/>
            <person name="Lloyd C."/>
            <person name="Ainscough R."/>
            <person name="Almeida J.P."/>
            <person name="Ambrose K.D."/>
            <person name="Anderson F."/>
            <person name="Andrew R.W."/>
            <person name="Ashwell R.I.S."/>
            <person name="Aubin K."/>
            <person name="Babbage A.K."/>
            <person name="Bagguley C.L."/>
            <person name="Bailey J."/>
            <person name="Beasley H."/>
            <person name="Bethel G."/>
            <person name="Bird C.P."/>
            <person name="Bray-Allen S."/>
            <person name="Brown J.Y."/>
            <person name="Brown A.J."/>
            <person name="Buckley D."/>
            <person name="Burton J."/>
            <person name="Bye J."/>
            <person name="Carder C."/>
            <person name="Chapman J.C."/>
            <person name="Clark S.Y."/>
            <person name="Clarke G."/>
            <person name="Clee C."/>
            <person name="Cobley V."/>
            <person name="Collier R.E."/>
            <person name="Corby N."/>
            <person name="Coville G.J."/>
            <person name="Davies J."/>
            <person name="Deadman R."/>
            <person name="Dunn M."/>
            <person name="Earthrowl M."/>
            <person name="Ellington A.G."/>
            <person name="Errington H."/>
            <person name="Frankish A."/>
            <person name="Frankland J."/>
            <person name="French L."/>
            <person name="Garner P."/>
            <person name="Garnett J."/>
            <person name="Gay L."/>
            <person name="Ghori M.R.J."/>
            <person name="Gibson R."/>
            <person name="Gilby L.M."/>
            <person name="Gillett W."/>
            <person name="Glithero R.J."/>
            <person name="Grafham D.V."/>
            <person name="Griffiths C."/>
            <person name="Griffiths-Jones S."/>
            <person name="Grocock R."/>
            <person name="Hammond S."/>
            <person name="Harrison E.S.I."/>
            <person name="Hart E."/>
            <person name="Haugen E."/>
            <person name="Heath P.D."/>
            <person name="Holmes S."/>
            <person name="Holt K."/>
            <person name="Howden P.J."/>
            <person name="Hunt A.R."/>
            <person name="Hunt S.E."/>
            <person name="Hunter G."/>
            <person name="Isherwood J."/>
            <person name="James R."/>
            <person name="Johnson C."/>
            <person name="Johnson D."/>
            <person name="Joy A."/>
            <person name="Kay M."/>
            <person name="Kershaw J.K."/>
            <person name="Kibukawa M."/>
            <person name="Kimberley A.M."/>
            <person name="King A."/>
            <person name="Knights A.J."/>
            <person name="Lad H."/>
            <person name="Laird G."/>
            <person name="Lawlor S."/>
            <person name="Leongamornlert D.A."/>
            <person name="Lloyd D.M."/>
            <person name="Loveland J."/>
            <person name="Lovell J."/>
            <person name="Lush M.J."/>
            <person name="Lyne R."/>
            <person name="Martin S."/>
            <person name="Mashreghi-Mohammadi M."/>
            <person name="Matthews L."/>
            <person name="Matthews N.S.W."/>
            <person name="McLaren S."/>
            <person name="Milne S."/>
            <person name="Mistry S."/>
            <person name="Moore M.J.F."/>
            <person name="Nickerson T."/>
            <person name="O'Dell C.N."/>
            <person name="Oliver K."/>
            <person name="Palmeiri A."/>
            <person name="Palmer S.A."/>
            <person name="Parker A."/>
            <person name="Patel D."/>
            <person name="Pearce A.V."/>
            <person name="Peck A.I."/>
            <person name="Pelan S."/>
            <person name="Phelps K."/>
            <person name="Phillimore B.J."/>
            <person name="Plumb R."/>
            <person name="Rajan J."/>
            <person name="Raymond C."/>
            <person name="Rouse G."/>
            <person name="Saenphimmachak C."/>
            <person name="Sehra H.K."/>
            <person name="Sheridan E."/>
            <person name="Shownkeen R."/>
            <person name="Sims S."/>
            <person name="Skuce C.D."/>
            <person name="Smith M."/>
            <person name="Steward C."/>
            <person name="Subramanian S."/>
            <person name="Sycamore N."/>
            <person name="Tracey A."/>
            <person name="Tromans A."/>
            <person name="Van Helmond Z."/>
            <person name="Wall M."/>
            <person name="Wallis J.M."/>
            <person name="White S."/>
            <person name="Whitehead S.L."/>
            <person name="Wilkinson J.E."/>
            <person name="Willey D.L."/>
            <person name="Williams H."/>
            <person name="Wilming L."/>
            <person name="Wray P.W."/>
            <person name="Wu Z."/>
            <person name="Coulson A."/>
            <person name="Vaudin M."/>
            <person name="Sulston J.E."/>
            <person name="Durbin R.M."/>
            <person name="Hubbard T."/>
            <person name="Wooster R."/>
            <person name="Dunham I."/>
            <person name="Carter N.P."/>
            <person name="McVean G."/>
            <person name="Ross M.T."/>
            <person name="Harrow J."/>
            <person name="Olson M.V."/>
            <person name="Beck S."/>
            <person name="Rogers J."/>
            <person name="Bentley D.R."/>
        </authorList>
    </citation>
    <scope>NUCLEOTIDE SEQUENCE [LARGE SCALE GENOMIC DNA]</scope>
</reference>
<reference key="5">
    <citation type="submission" date="2005-07" db="EMBL/GenBank/DDBJ databases">
        <authorList>
            <person name="Mural R.J."/>
            <person name="Istrail S."/>
            <person name="Sutton G."/>
            <person name="Florea L."/>
            <person name="Halpern A.L."/>
            <person name="Mobarry C.M."/>
            <person name="Lippert R."/>
            <person name="Walenz B."/>
            <person name="Shatkay H."/>
            <person name="Dew I."/>
            <person name="Miller J.R."/>
            <person name="Flanigan M.J."/>
            <person name="Edwards N.J."/>
            <person name="Bolanos R."/>
            <person name="Fasulo D."/>
            <person name="Halldorsson B.V."/>
            <person name="Hannenhalli S."/>
            <person name="Turner R."/>
            <person name="Yooseph S."/>
            <person name="Lu F."/>
            <person name="Nusskern D.R."/>
            <person name="Shue B.C."/>
            <person name="Zheng X.H."/>
            <person name="Zhong F."/>
            <person name="Delcher A.L."/>
            <person name="Huson D.H."/>
            <person name="Kravitz S.A."/>
            <person name="Mouchard L."/>
            <person name="Reinert K."/>
            <person name="Remington K.A."/>
            <person name="Clark A.G."/>
            <person name="Waterman M.S."/>
            <person name="Eichler E.E."/>
            <person name="Adams M.D."/>
            <person name="Hunkapiller M.W."/>
            <person name="Myers E.W."/>
            <person name="Venter J.C."/>
        </authorList>
    </citation>
    <scope>NUCLEOTIDE SEQUENCE [LARGE SCALE GENOMIC DNA]</scope>
</reference>
<reference key="6">
    <citation type="journal article" date="2004" name="Genome Res.">
        <title>The status, quality, and expansion of the NIH full-length cDNA project: the Mammalian Gene Collection (MGC).</title>
        <authorList>
            <consortium name="The MGC Project Team"/>
        </authorList>
    </citation>
    <scope>NUCLEOTIDE SEQUENCE [LARGE SCALE MRNA] (ISOFORM B)</scope>
    <source>
        <tissue>Brain</tissue>
        <tissue>Fetus</tissue>
    </source>
</reference>
<reference key="7">
    <citation type="journal article" date="2007" name="BMC Genomics">
        <title>The full-ORF clone resource of the German cDNA consortium.</title>
        <authorList>
            <person name="Bechtel S."/>
            <person name="Rosenfelder H."/>
            <person name="Duda A."/>
            <person name="Schmidt C.P."/>
            <person name="Ernst U."/>
            <person name="Wellenreuther R."/>
            <person name="Mehrle A."/>
            <person name="Schuster C."/>
            <person name="Bahr A."/>
            <person name="Bloecker H."/>
            <person name="Heubner D."/>
            <person name="Hoerlein A."/>
            <person name="Michel G."/>
            <person name="Wedler H."/>
            <person name="Koehrer K."/>
            <person name="Ottenwaelder B."/>
            <person name="Poustka A."/>
            <person name="Wiemann S."/>
            <person name="Schupp I."/>
        </authorList>
    </citation>
    <scope>NUCLEOTIDE SEQUENCE [LARGE SCALE MRNA] OF 705-1180 (ISOFORM A)</scope>
    <source>
        <tissue>Amygdala</tissue>
    </source>
</reference>
<reference key="8">
    <citation type="submission" date="1998-07" db="EMBL/GenBank/DDBJ databases">
        <title>YAC analysis and genes identification at a site of viral integration in the 1p36.1-36.2 chromosomal site.</title>
        <authorList>
            <person name="Casciano I."/>
            <person name="Volpi E.V."/>
            <person name="De Ambrosis A."/>
            <person name="Marchi J.M."/>
            <person name="Romani M."/>
        </authorList>
    </citation>
    <scope>NUCLEOTIDE SEQUENCE [MRNA] OF 855-1180 (ISOFORM B)</scope>
</reference>
<reference key="9">
    <citation type="journal article" date="2012" name="Hum. Mol. Genet.">
        <title>PARK9-associated ATP13A2 localizes to intracellular acidic vesicles and regulates cation homeostasis and neuronal integrity.</title>
        <authorList>
            <person name="Ramonet D."/>
            <person name="Podhajska A."/>
            <person name="Stafa K."/>
            <person name="Sonnay S."/>
            <person name="Trancikova A."/>
            <person name="Tsika E."/>
            <person name="Pletnikova O."/>
            <person name="Troncoso J.C."/>
            <person name="Glauser L."/>
            <person name="Moore D.J."/>
        </authorList>
    </citation>
    <scope>FUNCTION</scope>
    <scope>TISSUE SPECIFICITY</scope>
    <scope>SUBCELLULAR LOCATION</scope>
</reference>
<reference key="10">
    <citation type="journal article" date="2006" name="Nat. Genet.">
        <title>Hereditary parkinsonism with dementia is caused by mutations in ATP13A2, encoding a lysosomal type 5 P-type ATPase.</title>
        <authorList>
            <person name="Ramirez A."/>
            <person name="Heimbach A."/>
            <person name="Gruendemann J."/>
            <person name="Stiller B."/>
            <person name="Hampshire D."/>
            <person name="Cid L.P."/>
            <person name="Goebel I."/>
            <person name="Mubaidin A.F."/>
            <person name="Wriekat A.-L."/>
            <person name="Roeper J."/>
            <person name="Al-Din A."/>
            <person name="Hillmer A.M."/>
            <person name="Karsak M."/>
            <person name="Liss B."/>
            <person name="Woods C.G."/>
            <person name="Behrens M.I."/>
            <person name="Kubisch C."/>
        </authorList>
    </citation>
    <scope>INVOLVEMENT IN KRS</scope>
</reference>
<reference key="11">
    <citation type="journal article" date="2013" name="J. Proteome Res.">
        <title>Toward a comprehensive characterization of a human cancer cell phosphoproteome.</title>
        <authorList>
            <person name="Zhou H."/>
            <person name="Di Palma S."/>
            <person name="Preisinger C."/>
            <person name="Peng M."/>
            <person name="Polat A.N."/>
            <person name="Heck A.J."/>
            <person name="Mohammed S."/>
        </authorList>
    </citation>
    <scope>PHOSPHORYLATION [LARGE SCALE ANALYSIS] AT SER-151</scope>
    <scope>IDENTIFICATION BY MASS SPECTROMETRY [LARGE SCALE ANALYSIS]</scope>
    <source>
        <tissue>Erythroleukemia</tissue>
    </source>
</reference>
<reference key="12">
    <citation type="journal article" date="2014" name="Hum. Mol. Genet.">
        <title>Parkinson's disease-linked human PARK9/ATP13A2 maintains zinc homeostasis and promotes alpha-Synuclein externalization via exosomes.</title>
        <authorList>
            <person name="Kong S.M."/>
            <person name="Chan B.K."/>
            <person name="Park J.S."/>
            <person name="Hill K.J."/>
            <person name="Aitken J.B."/>
            <person name="Cottle L."/>
            <person name="Farghaian H."/>
            <person name="Cole A.R."/>
            <person name="Lay P.A."/>
            <person name="Sue C.M."/>
            <person name="Cooper A.A."/>
        </authorList>
    </citation>
    <scope>FUNCTION</scope>
    <scope>SUBCELLULAR LOCATION</scope>
</reference>
<reference key="13">
    <citation type="journal article" date="2014" name="J. Neurosci.">
        <title>ATP13A2/PARK9 regulates secretion of exosomes and alpha-synuclein.</title>
        <authorList>
            <person name="Tsunemi T."/>
            <person name="Hamada K."/>
            <person name="Krainc D."/>
        </authorList>
    </citation>
    <scope>FUNCTION</scope>
    <scope>SUBCELLULAR LOCATION</scope>
</reference>
<reference key="14">
    <citation type="journal article" date="2015" name="Proc. Natl. Acad. Sci. U.S.A.">
        <title>A lipid switch unlocks Parkinson's disease-associated ATP13A2.</title>
        <authorList>
            <person name="Holemans T."/>
            <person name="Soerensen D.M."/>
            <person name="van Veen S."/>
            <person name="Martin S."/>
            <person name="Hermans D."/>
            <person name="Kemmer G.C."/>
            <person name="Van den Haute C."/>
            <person name="Baekelandt V."/>
            <person name="Guenther Pomorski T."/>
            <person name="Agostinis P."/>
            <person name="Wuytack F."/>
            <person name="Palmgren M."/>
            <person name="Eggermont J."/>
            <person name="Vangheluwe P."/>
        </authorList>
    </citation>
    <scope>FUNCTION</scope>
    <scope>ACTIVITY REGULATION</scope>
    <scope>SUBCELLULAR LOCATION</scope>
    <scope>DOMAIN</scope>
    <scope>TOPOLOGY</scope>
    <scope>AUTOPHOSPHORYLATION</scope>
    <scope>ACTIVE SITE</scope>
    <scope>GLYCOSYLATION AT ASN-1033</scope>
    <scope>MUTAGENESIS OF GLY-59; 66-ARG--LYS-68; 74-ARG--ARG-78; 160-LYS--ARG-164 AND ASN-1033</scope>
</reference>
<reference key="15">
    <citation type="journal article" date="2019" name="Biochim. Biophys. Acta">
        <title>The Parkinson-associated human P5B-ATPase ATP13A2 modifies lipid homeostasis.</title>
        <authorList>
            <person name="Marcos A.L."/>
            <person name="Corradi G.R."/>
            <person name="Mazzitelli L.R."/>
            <person name="Casali C.I."/>
            <person name="Fernandez Tome M.D.C."/>
            <person name="Adamo H.P."/>
            <person name="de Tezanos Pinto F."/>
        </authorList>
    </citation>
    <scope>FUNCTION</scope>
</reference>
<reference key="16">
    <citation type="journal article" date="2019" name="J. Cell Biol.">
        <title>ATP13A2 facilitates HDAC6 recruitment to lysosome to promote autophagosome-lysosome fusion.</title>
        <authorList>
            <person name="Wang R."/>
            <person name="Tan J."/>
            <person name="Chen T."/>
            <person name="Han H."/>
            <person name="Tian R."/>
            <person name="Tan Y."/>
            <person name="Wu Y."/>
            <person name="Cui J."/>
            <person name="Chen F."/>
            <person name="Li J."/>
            <person name="Lv L."/>
            <person name="Guan X."/>
            <person name="Shang S."/>
            <person name="Lu J."/>
            <person name="Zhang Z."/>
        </authorList>
    </citation>
    <scope>FUNCTION</scope>
    <scope>INTERACTION WITH HDAC6</scope>
    <scope>CHARACTERIZATION OF VARIANTS KRS LEU-182 AND ARG-504</scope>
</reference>
<reference key="17">
    <citation type="journal article" date="2020" name="Nature">
        <title>ATP13A2 deficiency disrupts lysosomal polyamine export.</title>
        <authorList>
            <person name="van Veen S."/>
            <person name="Martin S."/>
            <person name="Van den Haute C."/>
            <person name="Benoy V."/>
            <person name="Lyons J."/>
            <person name="Vanhoutte R."/>
            <person name="Kahler J.P."/>
            <person name="Decuypere J.P."/>
            <person name="Gelders G."/>
            <person name="Lambie E."/>
            <person name="Zielich J."/>
            <person name="Swinnen J.V."/>
            <person name="Annaert W."/>
            <person name="Agostinis P."/>
            <person name="Ghesquiere B."/>
            <person name="Verhelst S."/>
            <person name="Baekelandt V."/>
            <person name="Eggermont J."/>
            <person name="Vangheluwe P."/>
        </authorList>
    </citation>
    <scope>FUNCTION</scope>
    <scope>CATALYTIC ACTIVITY</scope>
    <scope>ACTIVITY REGULATION</scope>
    <scope>BIOPHYSICOCHEMICAL PROPERTIES</scope>
    <scope>CHARACTERIZATION OF VARIANTS KRS MET-12; ARG-533; THR-746 AND ARG-877</scope>
    <scope>CHARACTERIZATION OF VARIANT SPG8 ILE-517</scope>
    <scope>MUTAGENESIS OF GLU-348; ALA-472; ASP-513; ASP-967 AND LYS-1067</scope>
</reference>
<reference key="18">
    <citation type="journal article" date="2007" name="Neurology">
        <title>ATP13A2 missense mutations in juvenile parkinsonism and young onset Parkinson disease.</title>
        <authorList>
            <person name="Di Fonzo A."/>
            <person name="Chien H.F."/>
            <person name="Socal M."/>
            <person name="Giraudo S."/>
            <person name="Tassorelli C."/>
            <person name="Iliceto G."/>
            <person name="Fabbrini G."/>
            <person name="Marconi R."/>
            <person name="Fincati E."/>
            <person name="Abbruzzese G."/>
            <person name="Marini P."/>
            <person name="Squitieri F."/>
            <person name="Horstink M.W."/>
            <person name="Montagna P."/>
            <person name="Libera A.D."/>
            <person name="Stocchi F."/>
            <person name="Goldwurm S."/>
            <person name="Ferreira J.J."/>
            <person name="Meco G."/>
            <person name="Martignoni E."/>
            <person name="Lopiano L."/>
            <person name="Jardim L.B."/>
            <person name="Oostra B.A."/>
            <person name="Barbosa E.R."/>
            <person name="Bonifati V."/>
        </authorList>
    </citation>
    <scope>VARIANTS KRS MET-12; ARG-504 AND ARG-533</scope>
</reference>
<reference key="19">
    <citation type="journal article" date="2008" name="Neurology">
        <title>PARK9-linked parkinsonism in eastern Asia: mutation detection in ATP13A2 and clinical phenotype.</title>
        <authorList>
            <person name="Ning Y.P."/>
            <person name="Kanai K."/>
            <person name="Tomiyama H."/>
            <person name="Li Y."/>
            <person name="Funayama M."/>
            <person name="Yoshino H."/>
            <person name="Sato S."/>
            <person name="Asahina M."/>
            <person name="Kuwabara S."/>
            <person name="Takeda A."/>
            <person name="Hattori T."/>
            <person name="Mizuno Y."/>
            <person name="Hattori N."/>
        </authorList>
    </citation>
    <scope>VARIANT KRS LEU-182</scope>
</reference>
<reference key="20">
    <citation type="journal article" date="2008" name="Neurology">
        <title>Novel ATP13A2 variant associated with Parkinson disease in Taiwan and Singapore.</title>
        <authorList>
            <person name="Lin C.H."/>
            <person name="Tan E.K."/>
            <person name="Chen M.L."/>
            <person name="Tan L.C."/>
            <person name="Lim H.Q."/>
            <person name="Chen G.S."/>
            <person name="Wu R.M."/>
        </authorList>
    </citation>
    <scope>VARIANT THR-746</scope>
</reference>
<reference key="21">
    <citation type="journal article" date="2009" name="Hum. Mutat.">
        <title>ATP13A2 variability in Parkinson disease.</title>
        <authorList>
            <person name="Vilarino-Guell C."/>
            <person name="Soto A.I."/>
            <person name="Lincoln S.J."/>
            <person name="Ben Yahmed S."/>
            <person name="Kefi M."/>
            <person name="Heckman M.G."/>
            <person name="Hulihan M.M."/>
            <person name="Chai H."/>
            <person name="Diehl N.N."/>
            <person name="Amouri R."/>
            <person name="Rajput A."/>
            <person name="Mash D.C."/>
            <person name="Dickson D.W."/>
            <person name="Middleton L.T."/>
            <person name="Gibson R.A."/>
            <person name="Hentati F."/>
            <person name="Farrer M.J."/>
        </authorList>
    </citation>
    <scope>VARIANTS SER-49; GLN-294; LEU-389; GLY-578; TRP-762; ILE-776 AND PHE-946</scope>
</reference>
<reference key="22">
    <citation type="journal article" date="2010" name="Mov. Disord.">
        <title>Clinical spectrum of Kufor-Rakeb syndrome in the Chilean kindred with ATP13A2 mutations.</title>
        <authorList>
            <person name="Behrens M.I."/>
            <person name="Bruggemann N."/>
            <person name="Chana P."/>
            <person name="Venegas P."/>
            <person name="Kagi M."/>
            <person name="Parrao T."/>
            <person name="Orellana P."/>
            <person name="Garrido C."/>
            <person name="Rojas C.V."/>
            <person name="Hauke J."/>
            <person name="Hahnen E."/>
            <person name="Gonzalez R."/>
            <person name="Seleme N."/>
            <person name="Fernandez V."/>
            <person name="Schmidt A."/>
            <person name="Binkofski F."/>
            <person name="Kompf D."/>
            <person name="Kubisch C."/>
            <person name="Hagenah J."/>
            <person name="Klein C."/>
            <person name="Ramirez A."/>
        </authorList>
    </citation>
    <scope>INVOLVEMENT IN KRS</scope>
</reference>
<reference key="23">
    <citation type="journal article" date="2011" name="Hum. Mutat.">
        <title>Pathogenic effects of novel mutations in the P-type ATPase ATP13A2 (PARK9) causing Kufor-Rakeb syndrome, a form of early-onset parkinsonism.</title>
        <authorList>
            <person name="Park J.S."/>
            <person name="Mehta P."/>
            <person name="Cooper A.A."/>
            <person name="Veivers D."/>
            <person name="Heimbach A."/>
            <person name="Stiller B."/>
            <person name="Kubisch C."/>
            <person name="Fung V.S."/>
            <person name="Krainc D."/>
            <person name="Mackay-Sim A."/>
            <person name="Sue C.M."/>
        </authorList>
    </citation>
    <scope>VARIANT KRS ARG-1059</scope>
    <scope>SUBCELLULAR LOCATION</scope>
    <scope>CHARACTERIZATION OF VARIANT KRS ARG-1059</scope>
</reference>
<reference key="24">
    <citation type="journal article" date="2011" name="Neurogenetics">
        <title>Novel ATP13A2 (PARK9) homozygous mutation in a family with marked phenotype variability.</title>
        <authorList>
            <person name="Santoro L."/>
            <person name="Breedveld G.J."/>
            <person name="Manganelli F."/>
            <person name="Iodice R."/>
            <person name="Pisciotta C."/>
            <person name="Nolano M."/>
            <person name="Punzo F."/>
            <person name="Quarantelli M."/>
            <person name="Pappata S."/>
            <person name="Di Fonzo A."/>
            <person name="Oostra B.A."/>
            <person name="Bonifati V."/>
        </authorList>
    </citation>
    <scope>VARIANT KRS ARG-877</scope>
</reference>
<reference key="25">
    <citation type="journal article" date="2012" name="Hum. Mol. Genet.">
        <title>Mutation of the parkinsonism gene ATP13A2 causes neuronal ceroid-lipofuscinosis.</title>
        <authorList>
            <person name="Bras J."/>
            <person name="Verloes A."/>
            <person name="Schneider S.A."/>
            <person name="Mole S.E."/>
            <person name="Guerreiro R.J."/>
        </authorList>
    </citation>
    <scope>VARIANT KRS ARG-854</scope>
</reference>
<reference key="26">
    <citation type="journal article" date="2012" name="Neurobiol. Aging">
        <title>ATP13A2 mutations impair mitochondrial function in fibroblasts from patients with Kufor-Rakeb syndrome.</title>
        <authorList>
            <person name="Gruenewald A."/>
            <person name="Arns B."/>
            <person name="Seibler P."/>
            <person name="Rakovic A."/>
            <person name="Muenchau A."/>
            <person name="Ramirez A."/>
            <person name="Sue C.M."/>
            <person name="Klein C."/>
        </authorList>
    </citation>
    <scope>VARIANT KRS VAL-522</scope>
    <scope>FUNCTION</scope>
</reference>
<reference key="27">
    <citation type="journal article" date="2012" name="PLoS ONE">
        <title>Common pathogenic effects of missense mutations in the P-type ATPase ATP13A2 (PARK9) associated with early-onset parkinsonism.</title>
        <authorList>
            <person name="Podhajska A."/>
            <person name="Musso A."/>
            <person name="Trancikova A."/>
            <person name="Stafa K."/>
            <person name="Moser R."/>
            <person name="Sonnay S."/>
            <person name="Glauser L."/>
            <person name="Moore D.J."/>
        </authorList>
    </citation>
    <scope>FUNCTION</scope>
    <scope>CHARACTERIZATION OF VARIANTS KRS MET-12; LEU-182; ARG-504; ARG-533; THR-746 AND ARG-877</scope>
    <scope>SUBCELLULAR LOCATION</scope>
</reference>
<reference key="28">
    <citation type="journal article" date="2016" name="Nat. Commun.">
        <title>The Parkinson's disease-associated genes ATP13A2 and SYT11 regulate autophagy via a common pathway.</title>
        <authorList>
            <person name="Bento C.F."/>
            <person name="Ashkenazi A."/>
            <person name="Jimenez-Sanchez M."/>
            <person name="Rubinsztein D.C."/>
        </authorList>
    </citation>
    <scope>FUNCTION</scope>
    <scope>INTERACTION WITH MYCBP2</scope>
</reference>
<reference key="29">
    <citation type="journal article" date="2016" name="Brain">
        <title>Genetic and phenotypic characterization of complex hereditary spastic paraplegia.</title>
        <authorList>
            <person name="Kara E."/>
            <person name="Tucci A."/>
            <person name="Manzoni C."/>
            <person name="Lynch D.S."/>
            <person name="Elpidorou M."/>
            <person name="Bettencourt C."/>
            <person name="Chelban V."/>
            <person name="Manole A."/>
            <person name="Hamed S.A."/>
            <person name="Haridy N.A."/>
            <person name="Federoff M."/>
            <person name="Preza E."/>
            <person name="Hughes D."/>
            <person name="Pittman A."/>
            <person name="Jaunmuktane Z."/>
            <person name="Brandner S."/>
            <person name="Xiromerisiou G."/>
            <person name="Wiethoff S."/>
            <person name="Schottlaender L."/>
            <person name="Proukakis C."/>
            <person name="Morris H."/>
            <person name="Warner T."/>
            <person name="Bhatia K.P."/>
            <person name="Korlipara L.V."/>
            <person name="Singleton A.B."/>
            <person name="Hardy J."/>
            <person name="Wood N.W."/>
            <person name="Lewis P.A."/>
            <person name="Houlden H."/>
        </authorList>
    </citation>
    <scope>INVOLVEMENT IN SPG78</scope>
</reference>
<reference key="30">
    <citation type="journal article" date="2017" name="Brain">
        <title>Loss-of-function mutations in the ATP13A2/PARK9 gene cause complicated hereditary spastic paraplegia (SPG78).</title>
        <authorList>
            <person name="Estrada-Cuzcano A."/>
            <person name="Martin S."/>
            <person name="Chamova T."/>
            <person name="Synofzik M."/>
            <person name="Timmann D."/>
            <person name="Holemans T."/>
            <person name="Andreeva A."/>
            <person name="Reichbauer J."/>
            <person name="De Rycke R."/>
            <person name="Chang D.I."/>
            <person name="van Veen S."/>
            <person name="Samuel J."/>
            <person name="Schoels L."/>
            <person name="Poeppel T."/>
            <person name="Mollerup Soerensen D."/>
            <person name="Asselbergh B."/>
            <person name="Klein C."/>
            <person name="Zuchner S."/>
            <person name="Jordanova A."/>
            <person name="Vangheluwe P."/>
            <person name="Tournev I."/>
            <person name="Schuele R."/>
        </authorList>
    </citation>
    <scope>INVOLVEMENT IN SPG78</scope>
    <scope>VARIANT SPG78 ILE-517</scope>
    <scope>CHARACTERIZATION OF VARIANTS KRS LEU-182 AND ARG-533</scope>
    <scope>CHARACTERIZATION OF VARIANT SPG78 ILE-517</scope>
    <scope>SUBCELLULAR LOCATION</scope>
    <scope>AUTOPHOSPHORYLATION</scope>
    <scope>MUTAGENESIS OF ASP-513</scope>
</reference>
<reference key="31">
    <citation type="journal article" date="2018" name="Brain Dev.">
        <title>ATP13A2 novel mutations causing a rare form of juvenile-onset Parkinson disease.</title>
        <authorList>
            <person name="Suleiman J."/>
            <person name="Hamwi N."/>
            <person name="El-Hattab A.W."/>
        </authorList>
    </citation>
    <scope>VARIANTS KRS PHE-441 AND THR-1069</scope>
</reference>
<reference key="32">
    <citation type="journal article" date="2024" name="Neurol. Sci.">
        <title>A novel ATP13A2 variant causing complicated hereditary spastic paraplegia.</title>
        <authorList>
            <person name="Zhang F."/>
            <person name="Liu P."/>
            <person name="Li J."/>
            <person name="Cen Z."/>
            <person name="Luo W."/>
        </authorList>
    </citation>
    <scope>VARIANT SPG78 PRO-927</scope>
    <scope>CHARACTERIZATION OF VARIANT SPG78 PRO-927</scope>
</reference>
<accession>Q9NQ11</accession>
<accession>O75700</accession>
<accession>Q5JXY1</accession>
<accession>Q5JXY2</accession>
<accession>Q6S9Z9</accession>
<comment type="function">
    <text evidence="11 12 15 16 17 19 20 22 23 24">ATPase which acts as a lysosomal polyamine exporter with high affinity for spermine (PubMed:31996848). Also stimulates cellular uptake of polyamines and protects against polyamine toxicity (PubMed:31996848). Plays a role in intracellular cation homeostasis and the maintenance of neuronal integrity (PubMed:22186024). Contributes to cellular zinc homeostasis (PubMed:24603074). Confers cellular protection against Mn(2+) and Zn(2+) toxicity and mitochondrial stress (PubMed:26134396). Required for proper lysosomal and mitochondrial maintenance (PubMed:22296644, PubMed:28137957). Regulates the autophagy-lysosome pathway through the control of SYT11 expression at both transcriptional and post-translational levels (PubMed:27278822). Facilitates recruitment of deacetylase HDAC6 to lysosomes to deacetylate CTTN, leading to actin polymerization, promotion of autophagosome-lysosome fusion and completion of autophagy (PubMed:30538141). Promotes secretion of exosomes as well as secretion of SCNA via exosomes (PubMed:24603074, PubMed:25392495). Plays a role in lipid homeostasis (PubMed:31132336).</text>
</comment>
<comment type="catalytic activity">
    <reaction evidence="24">
        <text>spermidine(out) + ATP + H2O = spermidine(in) + ADP + phosphate + H(+)</text>
        <dbReference type="Rhea" id="RHEA:29999"/>
        <dbReference type="ChEBI" id="CHEBI:15377"/>
        <dbReference type="ChEBI" id="CHEBI:15378"/>
        <dbReference type="ChEBI" id="CHEBI:30616"/>
        <dbReference type="ChEBI" id="CHEBI:43474"/>
        <dbReference type="ChEBI" id="CHEBI:57834"/>
        <dbReference type="ChEBI" id="CHEBI:456216"/>
    </reaction>
</comment>
<comment type="catalytic activity">
    <reaction evidence="24">
        <text>spermine(out) + ATP + H2O = spermine(in) + ADP + phosphate + H(+)</text>
        <dbReference type="Rhea" id="RHEA:63368"/>
        <dbReference type="ChEBI" id="CHEBI:15377"/>
        <dbReference type="ChEBI" id="CHEBI:15378"/>
        <dbReference type="ChEBI" id="CHEBI:30616"/>
        <dbReference type="ChEBI" id="CHEBI:43474"/>
        <dbReference type="ChEBI" id="CHEBI:45725"/>
        <dbReference type="ChEBI" id="CHEBI:456216"/>
    </reaction>
</comment>
<comment type="activity regulation">
    <text evidence="17 24">Accumulates in an inactive autophosphorylated state (PubMed:26134396). The presence of spermine results in a dose-dependent reduction in autophosphorylation (PubMed:31996848).</text>
</comment>
<comment type="biophysicochemical properties">
    <kinetics>
        <KM evidence="24">76 uM for spermine</KM>
        <Vmax evidence="24">159.0 nmol/min/mg enzyme</Vmax>
    </kinetics>
</comment>
<comment type="subunit">
    <text evidence="19 22">Interacts with MYCBP2; the interaction inhibits the ubiquitination of TSC2 by MYCBP2 (PubMed:27278822). Interacts with HDAC6; the interaction results in recruitment of HDAC6 to lysosomes to promote CTTN deacetylation (PubMed:30538141).</text>
</comment>
<comment type="interaction">
    <interactant intactId="EBI-6308763">
        <id>Q9NQ11</id>
    </interactant>
    <interactant intactId="EBI-1383433">
        <id>Q2M2I8</id>
        <label>AAK1</label>
    </interactant>
    <organismsDiffer>false</organismsDiffer>
    <experiments>2</experiments>
</comment>
<comment type="interaction">
    <interactant intactId="EBI-6308763">
        <id>Q9NQ11</id>
    </interactant>
    <interactant intactId="EBI-849893">
        <id>O60238</id>
        <label>BNIP3L</label>
    </interactant>
    <organismsDiffer>false</organismsDiffer>
    <experiments>2</experiments>
</comment>
<comment type="interaction">
    <interactant intactId="EBI-6308763">
        <id>Q9NQ11</id>
    </interactant>
    <interactant intactId="EBI-714707">
        <id>O14976</id>
        <label>GAK</label>
    </interactant>
    <organismsDiffer>false</organismsDiffer>
    <experiments>2</experiments>
</comment>
<comment type="interaction">
    <interactant intactId="EBI-6308763">
        <id>Q9NQ11</id>
    </interactant>
    <interactant intactId="EBI-301697">
        <id>Q9UBN7</id>
        <label>HDAC6</label>
    </interactant>
    <organismsDiffer>false</organismsDiffer>
    <experiments>2</experiments>
</comment>
<comment type="interaction">
    <interactant intactId="EBI-6308763">
        <id>Q9NQ11</id>
    </interactant>
    <interactant intactId="EBI-351896">
        <id>P11142</id>
        <label>HSPA8</label>
    </interactant>
    <organismsDiffer>false</organismsDiffer>
    <experiments>2</experiments>
</comment>
<comment type="interaction">
    <interactant intactId="EBI-6308763">
        <id>Q9NQ11</id>
    </interactant>
    <interactant intactId="EBI-751770">
        <id>Q9BT88</id>
        <label>SYT11</label>
    </interactant>
    <organismsDiffer>false</organismsDiffer>
    <experiments>2</experiments>
</comment>
<comment type="interaction">
    <interactant intactId="EBI-6308763">
        <id>Q9NQ11</id>
    </interactant>
    <interactant intactId="EBI-2799703">
        <id>O95070</id>
        <label>YIF1A</label>
    </interactant>
    <organismsDiffer>false</organismsDiffer>
    <experiments>2</experiments>
</comment>
<comment type="subcellular location">
    <subcellularLocation>
        <location evidence="10 11 14 15 17 20">Lysosome membrane</location>
        <topology evidence="2">Multi-pass membrane protein</topology>
    </subcellularLocation>
    <subcellularLocation>
        <location evidence="15 16 17">Late endosome membrane</location>
        <topology evidence="2">Multi-pass membrane protein</topology>
    </subcellularLocation>
    <subcellularLocation>
        <location evidence="15 16">Endosome</location>
        <location evidence="15 16">Multivesicular body membrane</location>
        <topology evidence="2">Multi-pass membrane protein</topology>
    </subcellularLocation>
    <subcellularLocation>
        <location evidence="15">Cytoplasmic vesicle</location>
        <location evidence="15">Autophagosome membrane</location>
        <topology evidence="2">Multi-pass membrane protein</topology>
    </subcellularLocation>
</comment>
<comment type="alternative products">
    <event type="alternative splicing"/>
    <isoform>
        <id>Q9NQ11-1</id>
        <name>A</name>
        <sequence type="displayed"/>
    </isoform>
    <isoform>
        <id>Q9NQ11-2</id>
        <name>B</name>
        <sequence type="described" ref="VSP_007310 VSP_007311 VSP_007312"/>
    </isoform>
    <isoform>
        <id>Q9NQ11-3</id>
        <name>3</name>
        <sequence type="described" ref="VSP_007310"/>
    </isoform>
</comment>
<comment type="tissue specificity">
    <text evidence="11">Expressed in brain; protein levels are markedly increased in brain from subjects with Parkinson disease and subjects with dementia with Lewy bodies. Detected in pyramidal neurons located throughout the cingulate cortex (at protein level). In the substantia nigra, it is found in neuromelanin-positive dopaminergic neurons (at protein level).</text>
</comment>
<comment type="domain">
    <text evidence="17">The N-terminal region is required for targeting to late endosomes/lysosomes. It does not traverse the membrane but contains a membrane-embedded intramembrane domain and interacts with the lipids phosphatidic acid (PA) and phosphatidylinositol 3,5-bisphosphate (PI(3,5)P2) (PubMed:26134396). PA and PI(3,5)P2 are required for the protective effect against mitochondrial stress (PubMed:26134396).</text>
</comment>
<comment type="PTM">
    <text evidence="17 24 33">Autophosphorylated (PubMed:26134396, PubMed:28137957). Accumulates in an inactive autophosphorylated state and autophosphorylation is stimulated by phosphatidic acid and phosphatidylinositol 3,5-bisphosphate but not by Mn(2+) or Zn(2+) (PubMed:26134396). The presence of spermine results in a dose-dependent reduction in autophosphorylation (PubMed:31996848).</text>
</comment>
<comment type="disease" evidence="3 4 5 8 9 10 12 13 14 20 21 22 24">
    <disease id="DI-01870">
        <name>Kufor-Rakeb syndrome</name>
        <acronym>KRS</acronym>
        <description>A rare form of autosomal recessive juvenile or early-onset, levodopa-responsive parkinsonism. In addition to typical parkinsonian signs, clinical manifestations of Kufor-Rakeb syndrome include behavioral problems, facial tremor, pyramidal tract dysfunction, supranuclear gaze palsy, and dementia.</description>
        <dbReference type="MIM" id="606693"/>
    </disease>
    <text evidence="13">The disease is caused by variants affecting the gene represented in this entry. KRS has also been referred to as neuronal ceroid lipofuscinosis 12 (CLN12), due to neuronal and glial lipofuscin deposits detected in the cortex, basal nuclei and cerebellum of some patients.</text>
</comment>
<comment type="disease" evidence="18 20 25">
    <disease id="DI-04938">
        <name>Spastic paraplegia 78, autosomal recessive</name>
        <acronym>SPG78</acronym>
        <description>A form of spastic paraplegia, a neurodegenerative disorder characterized by a slow, gradual, progressive weakness and spasticity of the lower limbs. Rate of progression and the severity of symptoms are quite variable. Initial symptoms may include difficulty with balance, weakness and stiffness in the legs, muscle spasms, and dragging the toes when walking. In some forms of the disorder, bladder symptoms (such as incontinence) may appear, or the weakness and stiffness may spread to other parts of the body.</description>
        <dbReference type="MIM" id="617225"/>
    </disease>
    <text>The disease is caused by variants affecting the gene represented in this entry.</text>
</comment>
<comment type="similarity">
    <text evidence="31">Belongs to the cation transport ATPase (P-type) (TC 3.A.3) family. Type V subfamily.</text>
</comment>
<comment type="sequence caution" evidence="31">
    <conflict type="frameshift">
        <sequence resource="EMBL-CDS" id="CAA08912"/>
    </conflict>
</comment>
<sequence length="1180" mass="128794">MSADSSPLVGSTPTGYGTLTIGTSIDPLSSSVSSVRLSGYCGSPWRVIGYHVVVWMMAGIPLLLFRWKPLWGVRLRLRPCNLAHAETLVIEIRDKEDSSWQLFTVQVQTEAIGEGSLEPSPQSQAEDGRSQAAVGAVPEGAWKDTAQLHKSEEAVSVGQKRVLRYYLFQGQRYIWIETQQAFYQVSLLDHGRSCDDVHRSRHGLSLQDQMVRKAIYGPNVISIPVKSYPQLLVDEALNPYYGFQAFSIALWLADHYYWYALCIFLISSISICLSLYKTRKQSQTLRDMVKLSMRVCVCRPGGEEEWVDSSELVPGDCLVLPQEGGLMPCDAALVAGECMVNESSLTGESIPVLKTALPEGLGPYCAETHRRHTLFCGTLILQARAYVGPHVLAVVTRTGFCTAKGGLVSSILHPRPINFKFYKHSMKFVAALSVLALLGTIYSIFILYRNRVPLNEIVIRALDLVTVVVPPALPAAMTVCTLYAQSRLRRQGIFCIHPLRINLGGKLQLVCFDKTGTLTEDGLDVMGVVPLKGQAFLPLVPEPRRLPVGPLLRALATCHALSRLQDTPVGDPMDLKMVESTGWVLEEEPAADSAFGTQVLAVMRPPLWEPQLQAMEEPPVPVSVLHRFPFSSALQRMSVVVAWPGATQPEAYVKGSPELVAGLCNPETVPTDFAQMLQSYTAAGYRVVALASKPLPTVPSLEAAQQLTRDTVEGDLSLLGLLVMRNLLKPQTTPVIQALRRTRIRAVMVTGDNLQTAVTVARGCGMVAPQEHLIIVHATHPERGQPASLEFLPMESPTAVNGVKDPDQAASYTVEPDPRSRHLALSGPTFGIIVKHFPKLLPKVLVQGTVFARMAPEQKTELVCELQKLQYCVGMCGDGANDCGALKAADVGISLSQAEASVVSPFTSSMASIECVPMVIREGRCSLDTSFSVFKYMALYSLTQFISVLILYTINTNLGDLQFLAIDLVITTTVAVLMSRTGPALVLGRVRPPGALLSVPVLSSLLLQMVLVTGVQLGGYFLTLAQPWFVPLNRTVAAPDNLPNYENTVVFSLSSFQYLILAAAVSKGAPFRRPLYTNVPFLVALALLSSVLVGLVLVPGLLQGPLALRNITDTGFKLLLLGLVTLNFVGAFMLESVLDQCLPACLRRLRPKRASKKRFKQLERELAEQPWPPLPAGPLR</sequence>
<keyword id="KW-0002">3D-structure</keyword>
<keyword id="KW-0025">Alternative splicing</keyword>
<keyword id="KW-0067">ATP-binding</keyword>
<keyword id="KW-0968">Cytoplasmic vesicle</keyword>
<keyword id="KW-0225">Disease variant</keyword>
<keyword id="KW-0967">Endosome</keyword>
<keyword id="KW-0325">Glycoprotein</keyword>
<keyword id="KW-0890">Hereditary spastic paraplegia</keyword>
<keyword id="KW-0446">Lipid-binding</keyword>
<keyword id="KW-0458">Lysosome</keyword>
<keyword id="KW-0460">Magnesium</keyword>
<keyword id="KW-0472">Membrane</keyword>
<keyword id="KW-0479">Metal-binding</keyword>
<keyword id="KW-0523">Neurodegeneration</keyword>
<keyword id="KW-0525">Neuronal ceroid lipofuscinosis</keyword>
<keyword id="KW-0547">Nucleotide-binding</keyword>
<keyword id="KW-0908">Parkinsonism</keyword>
<keyword id="KW-0597">Phosphoprotein</keyword>
<keyword id="KW-1267">Proteomics identification</keyword>
<keyword id="KW-1185">Reference proteome</keyword>
<keyword id="KW-1278">Translocase</keyword>
<keyword id="KW-0812">Transmembrane</keyword>
<keyword id="KW-1133">Transmembrane helix</keyword>
<keyword id="KW-0813">Transport</keyword>
<proteinExistence type="evidence at protein level"/>